<protein>
    <recommendedName>
        <fullName>Coagulation factor XI</fullName>
        <shortName>FXI</shortName>
        <ecNumber evidence="27">3.4.21.27</ecNumber>
    </recommendedName>
    <alternativeName>
        <fullName>Plasma thromboplastin antecedent</fullName>
        <shortName>PTA</shortName>
    </alternativeName>
    <component>
        <recommendedName>
            <fullName>Coagulation factor XIa heavy chain</fullName>
        </recommendedName>
    </component>
    <component>
        <recommendedName>
            <fullName>Coagulation factor XIa light chain</fullName>
        </recommendedName>
    </component>
</protein>
<accession>P03951</accession>
<accession>D3DP64</accession>
<accession>Q4W5C2</accession>
<accession>Q9Y495</accession>
<organism>
    <name type="scientific">Homo sapiens</name>
    <name type="common">Human</name>
    <dbReference type="NCBI Taxonomy" id="9606"/>
    <lineage>
        <taxon>Eukaryota</taxon>
        <taxon>Metazoa</taxon>
        <taxon>Chordata</taxon>
        <taxon>Craniata</taxon>
        <taxon>Vertebrata</taxon>
        <taxon>Euteleostomi</taxon>
        <taxon>Mammalia</taxon>
        <taxon>Eutheria</taxon>
        <taxon>Euarchontoglires</taxon>
        <taxon>Primates</taxon>
        <taxon>Haplorrhini</taxon>
        <taxon>Catarrhini</taxon>
        <taxon>Hominidae</taxon>
        <taxon>Homo</taxon>
    </lineage>
</organism>
<dbReference type="EC" id="3.4.21.27" evidence="27"/>
<dbReference type="EMBL" id="M13142">
    <property type="protein sequence ID" value="AAA52487.1"/>
    <property type="molecule type" value="mRNA"/>
</dbReference>
<dbReference type="EMBL" id="M20218">
    <property type="protein sequence ID" value="AAA51985.1"/>
    <property type="molecule type" value="Genomic_DNA"/>
</dbReference>
<dbReference type="EMBL" id="M18296">
    <property type="protein sequence ID" value="AAA51985.1"/>
    <property type="status" value="JOINED"/>
    <property type="molecule type" value="Genomic_DNA"/>
</dbReference>
<dbReference type="EMBL" id="M21184">
    <property type="protein sequence ID" value="AAA51985.1"/>
    <property type="status" value="JOINED"/>
    <property type="molecule type" value="Genomic_DNA"/>
</dbReference>
<dbReference type="EMBL" id="M18298">
    <property type="protein sequence ID" value="AAA51985.1"/>
    <property type="status" value="JOINED"/>
    <property type="molecule type" value="Genomic_DNA"/>
</dbReference>
<dbReference type="EMBL" id="M18299">
    <property type="protein sequence ID" value="AAA51985.1"/>
    <property type="status" value="JOINED"/>
    <property type="molecule type" value="Genomic_DNA"/>
</dbReference>
<dbReference type="EMBL" id="M18300">
    <property type="protein sequence ID" value="AAA51985.1"/>
    <property type="status" value="JOINED"/>
    <property type="molecule type" value="Genomic_DNA"/>
</dbReference>
<dbReference type="EMBL" id="M18301">
    <property type="protein sequence ID" value="AAA51985.1"/>
    <property type="status" value="JOINED"/>
    <property type="molecule type" value="Genomic_DNA"/>
</dbReference>
<dbReference type="EMBL" id="M18302">
    <property type="protein sequence ID" value="AAA51985.1"/>
    <property type="status" value="JOINED"/>
    <property type="molecule type" value="Genomic_DNA"/>
</dbReference>
<dbReference type="EMBL" id="M18303">
    <property type="protein sequence ID" value="AAA51985.1"/>
    <property type="status" value="JOINED"/>
    <property type="molecule type" value="Genomic_DNA"/>
</dbReference>
<dbReference type="EMBL" id="M18304">
    <property type="protein sequence ID" value="AAA51985.1"/>
    <property type="status" value="JOINED"/>
    <property type="molecule type" value="Genomic_DNA"/>
</dbReference>
<dbReference type="EMBL" id="M19417">
    <property type="protein sequence ID" value="AAA51985.1"/>
    <property type="status" value="JOINED"/>
    <property type="molecule type" value="Genomic_DNA"/>
</dbReference>
<dbReference type="EMBL" id="M20217">
    <property type="protein sequence ID" value="AAA51985.1"/>
    <property type="status" value="JOINED"/>
    <property type="molecule type" value="Genomic_DNA"/>
</dbReference>
<dbReference type="EMBL" id="AF045649">
    <property type="protein sequence ID" value="AAC24506.1"/>
    <property type="molecule type" value="mRNA"/>
</dbReference>
<dbReference type="EMBL" id="AY191837">
    <property type="protein sequence ID" value="AAN85554.1"/>
    <property type="molecule type" value="Genomic_DNA"/>
</dbReference>
<dbReference type="EMBL" id="AC110771">
    <property type="protein sequence ID" value="AAY40901.1"/>
    <property type="molecule type" value="Genomic_DNA"/>
</dbReference>
<dbReference type="EMBL" id="CH471056">
    <property type="protein sequence ID" value="EAX04621.1"/>
    <property type="molecule type" value="Genomic_DNA"/>
</dbReference>
<dbReference type="EMBL" id="BC119014">
    <property type="protein sequence ID" value="AAI19015.1"/>
    <property type="molecule type" value="mRNA"/>
</dbReference>
<dbReference type="EMBL" id="BC122863">
    <property type="protein sequence ID" value="AAI22864.1"/>
    <property type="molecule type" value="mRNA"/>
</dbReference>
<dbReference type="CCDS" id="CCDS3847.1">
    <molecule id="P03951-1"/>
</dbReference>
<dbReference type="PIR" id="A27431">
    <property type="entry name" value="KFHU1"/>
</dbReference>
<dbReference type="RefSeq" id="NP_000119.1">
    <molecule id="P03951-1"/>
    <property type="nucleotide sequence ID" value="NM_000128.4"/>
</dbReference>
<dbReference type="PDB" id="1XX9">
    <property type="method" value="X-ray"/>
    <property type="resolution" value="2.20 A"/>
    <property type="chains" value="A/B=388-625"/>
</dbReference>
<dbReference type="PDB" id="1XXD">
    <property type="method" value="X-ray"/>
    <property type="resolution" value="2.91 A"/>
    <property type="chains" value="A/B=388-625"/>
</dbReference>
<dbReference type="PDB" id="1XXF">
    <property type="method" value="X-ray"/>
    <property type="resolution" value="2.60 A"/>
    <property type="chains" value="A/B=388-625"/>
</dbReference>
<dbReference type="PDB" id="1ZHM">
    <property type="method" value="X-ray"/>
    <property type="resolution" value="1.96 A"/>
    <property type="chains" value="A=388-624"/>
</dbReference>
<dbReference type="PDB" id="1ZHP">
    <property type="method" value="X-ray"/>
    <property type="resolution" value="2.70 A"/>
    <property type="chains" value="A=388-625"/>
</dbReference>
<dbReference type="PDB" id="1ZHR">
    <property type="method" value="X-ray"/>
    <property type="resolution" value="1.73 A"/>
    <property type="chains" value="A=388-625"/>
</dbReference>
<dbReference type="PDB" id="1ZJD">
    <property type="method" value="X-ray"/>
    <property type="resolution" value="2.60 A"/>
    <property type="chains" value="A=388-624"/>
</dbReference>
<dbReference type="PDB" id="1ZLR">
    <property type="method" value="X-ray"/>
    <property type="resolution" value="2.50 A"/>
    <property type="chains" value="A=388-624"/>
</dbReference>
<dbReference type="PDB" id="1ZMJ">
    <property type="method" value="X-ray"/>
    <property type="resolution" value="2.00 A"/>
    <property type="chains" value="A=388-624"/>
</dbReference>
<dbReference type="PDB" id="1ZML">
    <property type="method" value="X-ray"/>
    <property type="resolution" value="2.25 A"/>
    <property type="chains" value="A=388-625"/>
</dbReference>
<dbReference type="PDB" id="1ZMN">
    <property type="method" value="X-ray"/>
    <property type="resolution" value="2.05 A"/>
    <property type="chains" value="A=388-625"/>
</dbReference>
<dbReference type="PDB" id="1ZOM">
    <property type="method" value="X-ray"/>
    <property type="resolution" value="2.25 A"/>
    <property type="chains" value="A=388-624"/>
</dbReference>
<dbReference type="PDB" id="1ZPB">
    <property type="method" value="X-ray"/>
    <property type="resolution" value="2.10 A"/>
    <property type="chains" value="A=388-624"/>
</dbReference>
<dbReference type="PDB" id="1ZPC">
    <property type="method" value="X-ray"/>
    <property type="resolution" value="2.60 A"/>
    <property type="chains" value="A=388-624"/>
</dbReference>
<dbReference type="PDB" id="1ZPZ">
    <property type="method" value="X-ray"/>
    <property type="resolution" value="2.50 A"/>
    <property type="chains" value="A=388-625"/>
</dbReference>
<dbReference type="PDB" id="1ZRK">
    <property type="method" value="X-ray"/>
    <property type="resolution" value="2.30 A"/>
    <property type="chains" value="A=388-625"/>
</dbReference>
<dbReference type="PDB" id="1ZSJ">
    <property type="method" value="X-ray"/>
    <property type="resolution" value="1.90 A"/>
    <property type="chains" value="A=388-625"/>
</dbReference>
<dbReference type="PDB" id="1ZSK">
    <property type="method" value="X-ray"/>
    <property type="resolution" value="1.90 A"/>
    <property type="chains" value="A=388-625"/>
</dbReference>
<dbReference type="PDB" id="1ZSL">
    <property type="method" value="X-ray"/>
    <property type="resolution" value="2.05 A"/>
    <property type="chains" value="A=388-625"/>
</dbReference>
<dbReference type="PDB" id="1ZTJ">
    <property type="method" value="X-ray"/>
    <property type="resolution" value="2.05 A"/>
    <property type="chains" value="A=388-624"/>
</dbReference>
<dbReference type="PDB" id="1ZTK">
    <property type="method" value="X-ray"/>
    <property type="resolution" value="2.50 A"/>
    <property type="chains" value="A=388-624"/>
</dbReference>
<dbReference type="PDB" id="1ZTL">
    <property type="method" value="X-ray"/>
    <property type="resolution" value="2.60 A"/>
    <property type="chains" value="A=388-624"/>
</dbReference>
<dbReference type="PDB" id="2FDA">
    <property type="method" value="X-ray"/>
    <property type="resolution" value="2.00 A"/>
    <property type="chains" value="A=388-625"/>
</dbReference>
<dbReference type="PDB" id="2J8J">
    <property type="method" value="NMR"/>
    <property type="chains" value="A/B=290-379"/>
</dbReference>
<dbReference type="PDB" id="2J8L">
    <property type="method" value="NMR"/>
    <property type="chains" value="A/B=290-379"/>
</dbReference>
<dbReference type="PDB" id="3BG8">
    <property type="method" value="X-ray"/>
    <property type="resolution" value="1.60 A"/>
    <property type="chains" value="A=388-625"/>
</dbReference>
<dbReference type="PDB" id="3SOR">
    <property type="method" value="X-ray"/>
    <property type="resolution" value="1.80 A"/>
    <property type="chains" value="A=388-625"/>
</dbReference>
<dbReference type="PDB" id="3SOS">
    <property type="method" value="X-ray"/>
    <property type="resolution" value="2.58 A"/>
    <property type="chains" value="A=388-625"/>
</dbReference>
<dbReference type="PDB" id="4CR5">
    <property type="method" value="X-ray"/>
    <property type="resolution" value="2.00 A"/>
    <property type="chains" value="A=388-625"/>
</dbReference>
<dbReference type="PDB" id="4CR9">
    <property type="method" value="X-ray"/>
    <property type="resolution" value="1.70 A"/>
    <property type="chains" value="A=388-625"/>
</dbReference>
<dbReference type="PDB" id="4CRA">
    <property type="method" value="X-ray"/>
    <property type="resolution" value="1.80 A"/>
    <property type="chains" value="A=388-625"/>
</dbReference>
<dbReference type="PDB" id="4CRB">
    <property type="method" value="X-ray"/>
    <property type="resolution" value="1.85 A"/>
    <property type="chains" value="A=388-625"/>
</dbReference>
<dbReference type="PDB" id="4CRC">
    <property type="method" value="X-ray"/>
    <property type="resolution" value="1.60 A"/>
    <property type="chains" value="A=388-625"/>
</dbReference>
<dbReference type="PDB" id="4CRD">
    <property type="method" value="X-ray"/>
    <property type="resolution" value="2.10 A"/>
    <property type="chains" value="A=388-625"/>
</dbReference>
<dbReference type="PDB" id="4CRE">
    <property type="method" value="X-ray"/>
    <property type="resolution" value="1.73 A"/>
    <property type="chains" value="A=388-625"/>
</dbReference>
<dbReference type="PDB" id="4CRF">
    <property type="method" value="X-ray"/>
    <property type="resolution" value="2.30 A"/>
    <property type="chains" value="A=388-625"/>
</dbReference>
<dbReference type="PDB" id="4CRG">
    <property type="method" value="X-ray"/>
    <property type="resolution" value="1.25 A"/>
    <property type="chains" value="A=388-625"/>
</dbReference>
<dbReference type="PDB" id="4D76">
    <property type="method" value="X-ray"/>
    <property type="resolution" value="1.77 A"/>
    <property type="chains" value="A=388-625"/>
</dbReference>
<dbReference type="PDB" id="4D7F">
    <property type="method" value="X-ray"/>
    <property type="resolution" value="1.62 A"/>
    <property type="chains" value="A=388-625"/>
</dbReference>
<dbReference type="PDB" id="4D7G">
    <property type="method" value="X-ray"/>
    <property type="resolution" value="2.33 A"/>
    <property type="chains" value="A=388-625"/>
</dbReference>
<dbReference type="PDB" id="4NA7">
    <property type="method" value="X-ray"/>
    <property type="resolution" value="2.80 A"/>
    <property type="chains" value="A=388-625"/>
</dbReference>
<dbReference type="PDB" id="4NA8">
    <property type="method" value="X-ray"/>
    <property type="resolution" value="2.30 A"/>
    <property type="chains" value="A=388-625"/>
</dbReference>
<dbReference type="PDB" id="4TY6">
    <property type="method" value="X-ray"/>
    <property type="resolution" value="1.85 A"/>
    <property type="chains" value="A=388-625, H=375-387"/>
</dbReference>
<dbReference type="PDB" id="4TY7">
    <property type="method" value="X-ray"/>
    <property type="resolution" value="2.09 A"/>
    <property type="chains" value="A=388-625"/>
</dbReference>
<dbReference type="PDB" id="4WXI">
    <property type="method" value="X-ray"/>
    <property type="resolution" value="2.60 A"/>
    <property type="chains" value="A=388-625"/>
</dbReference>
<dbReference type="PDB" id="4X6M">
    <property type="method" value="X-ray"/>
    <property type="resolution" value="2.40 A"/>
    <property type="chains" value="A=388-625"/>
</dbReference>
<dbReference type="PDB" id="4X6N">
    <property type="method" value="X-ray"/>
    <property type="resolution" value="2.10 A"/>
    <property type="chains" value="A=388-625, H=375-387"/>
</dbReference>
<dbReference type="PDB" id="4X6O">
    <property type="method" value="X-ray"/>
    <property type="resolution" value="2.10 A"/>
    <property type="chains" value="A=388-625"/>
</dbReference>
<dbReference type="PDB" id="4X6P">
    <property type="method" value="X-ray"/>
    <property type="resolution" value="1.93 A"/>
    <property type="chains" value="A/B=388-625"/>
</dbReference>
<dbReference type="PDB" id="4Y8X">
    <property type="method" value="X-ray"/>
    <property type="resolution" value="1.90 A"/>
    <property type="chains" value="A=388-625"/>
</dbReference>
<dbReference type="PDB" id="4Y8Y">
    <property type="method" value="X-ray"/>
    <property type="resolution" value="2.60 A"/>
    <property type="chains" value="A=388-625"/>
</dbReference>
<dbReference type="PDB" id="4Y8Z">
    <property type="method" value="X-ray"/>
    <property type="resolution" value="2.20 A"/>
    <property type="chains" value="A=388-625"/>
</dbReference>
<dbReference type="PDB" id="5E2O">
    <property type="method" value="X-ray"/>
    <property type="resolution" value="2.08 A"/>
    <property type="chains" value="A=388-625"/>
</dbReference>
<dbReference type="PDB" id="5E2P">
    <property type="method" value="X-ray"/>
    <property type="resolution" value="2.11 A"/>
    <property type="chains" value="A=388-625"/>
</dbReference>
<dbReference type="PDB" id="5EOD">
    <property type="method" value="X-ray"/>
    <property type="resolution" value="3.10 A"/>
    <property type="chains" value="A=20-625"/>
</dbReference>
<dbReference type="PDB" id="5EOK">
    <property type="method" value="X-ray"/>
    <property type="resolution" value="2.80 A"/>
    <property type="chains" value="A=20-625"/>
</dbReference>
<dbReference type="PDB" id="5EXL">
    <property type="method" value="X-ray"/>
    <property type="resolution" value="2.30 A"/>
    <property type="chains" value="A=388-625"/>
</dbReference>
<dbReference type="PDB" id="5EXM">
    <property type="method" value="X-ray"/>
    <property type="resolution" value="2.09 A"/>
    <property type="chains" value="A=388-625"/>
</dbReference>
<dbReference type="PDB" id="5EXN">
    <property type="method" value="X-ray"/>
    <property type="resolution" value="1.49 A"/>
    <property type="chains" value="A=388-625"/>
</dbReference>
<dbReference type="PDB" id="5I25">
    <property type="method" value="X-ray"/>
    <property type="resolution" value="2.85 A"/>
    <property type="chains" value="A=19-625"/>
</dbReference>
<dbReference type="PDB" id="5Q0D">
    <property type="method" value="X-ray"/>
    <property type="resolution" value="2.12 A"/>
    <property type="chains" value="A=388-625"/>
</dbReference>
<dbReference type="PDB" id="5Q0E">
    <property type="method" value="X-ray"/>
    <property type="resolution" value="2.12 A"/>
    <property type="chains" value="A=388-625"/>
</dbReference>
<dbReference type="PDB" id="5Q0F">
    <property type="method" value="X-ray"/>
    <property type="resolution" value="2.12 A"/>
    <property type="chains" value="A=388-625"/>
</dbReference>
<dbReference type="PDB" id="5Q0G">
    <property type="method" value="X-ray"/>
    <property type="resolution" value="2.60 A"/>
    <property type="chains" value="A=388-625"/>
</dbReference>
<dbReference type="PDB" id="5Q0H">
    <property type="method" value="X-ray"/>
    <property type="resolution" value="2.50 A"/>
    <property type="chains" value="A=388-625"/>
</dbReference>
<dbReference type="PDB" id="5QCK">
    <property type="method" value="X-ray"/>
    <property type="resolution" value="2.64 A"/>
    <property type="chains" value="A=388-625"/>
</dbReference>
<dbReference type="PDB" id="5QCL">
    <property type="method" value="X-ray"/>
    <property type="resolution" value="2.11 A"/>
    <property type="chains" value="A=388-625"/>
</dbReference>
<dbReference type="PDB" id="5QCM">
    <property type="method" value="X-ray"/>
    <property type="resolution" value="2.20 A"/>
    <property type="chains" value="A=388-625"/>
</dbReference>
<dbReference type="PDB" id="5QCN">
    <property type="method" value="X-ray"/>
    <property type="resolution" value="2.30 A"/>
    <property type="chains" value="A=388-625"/>
</dbReference>
<dbReference type="PDB" id="5QQO">
    <property type="method" value="X-ray"/>
    <property type="resolution" value="2.00 A"/>
    <property type="chains" value="A=388-625"/>
</dbReference>
<dbReference type="PDB" id="5QQP">
    <property type="method" value="X-ray"/>
    <property type="resolution" value="2.08 A"/>
    <property type="chains" value="A=388-625"/>
</dbReference>
<dbReference type="PDB" id="5QTT">
    <property type="method" value="X-ray"/>
    <property type="resolution" value="2.23 A"/>
    <property type="chains" value="A=388-625"/>
</dbReference>
<dbReference type="PDB" id="5QTV">
    <property type="method" value="X-ray"/>
    <property type="resolution" value="2.20 A"/>
    <property type="chains" value="A=388-625"/>
</dbReference>
<dbReference type="PDB" id="5QTW">
    <property type="method" value="X-ray"/>
    <property type="resolution" value="2.12 A"/>
    <property type="chains" value="A=388-625"/>
</dbReference>
<dbReference type="PDB" id="5QTY">
    <property type="method" value="X-ray"/>
    <property type="resolution" value="1.89 A"/>
    <property type="chains" value="A=388-625"/>
</dbReference>
<dbReference type="PDB" id="5TKS">
    <property type="method" value="X-ray"/>
    <property type="resolution" value="1.55 A"/>
    <property type="chains" value="A=388-625"/>
</dbReference>
<dbReference type="PDB" id="5TKT">
    <property type="method" value="X-ray"/>
    <property type="resolution" value="2.12 A"/>
    <property type="chains" value="A=388-625"/>
</dbReference>
<dbReference type="PDB" id="5TKU">
    <property type="method" value="X-ray"/>
    <property type="resolution" value="2.12 A"/>
    <property type="chains" value="A=388-625"/>
</dbReference>
<dbReference type="PDB" id="5WB6">
    <property type="method" value="X-ray"/>
    <property type="resolution" value="2.35 A"/>
    <property type="chains" value="A=388-625"/>
</dbReference>
<dbReference type="PDB" id="6AOD">
    <property type="method" value="X-ray"/>
    <property type="resolution" value="1.80 A"/>
    <property type="chains" value="C=388-624"/>
</dbReference>
<dbReference type="PDB" id="6C0S">
    <property type="method" value="X-ray"/>
    <property type="resolution" value="2.35 A"/>
    <property type="chains" value="A=388-625"/>
</dbReference>
<dbReference type="PDB" id="6HHC">
    <property type="method" value="X-ray"/>
    <property type="resolution" value="2.70 A"/>
    <property type="chains" value="A=388-625"/>
</dbReference>
<dbReference type="PDB" id="6I58">
    <property type="method" value="X-ray"/>
    <property type="resolution" value="2.60 A"/>
    <property type="chains" value="A=19-625"/>
</dbReference>
<dbReference type="PDB" id="6R8X">
    <property type="method" value="X-ray"/>
    <property type="resolution" value="2.04 A"/>
    <property type="chains" value="A=388-625"/>
</dbReference>
<dbReference type="PDB" id="6TS4">
    <property type="method" value="X-ray"/>
    <property type="resolution" value="1.17 A"/>
    <property type="chains" value="A=388-625"/>
</dbReference>
<dbReference type="PDB" id="6TS5">
    <property type="method" value="X-ray"/>
    <property type="resolution" value="1.29 A"/>
    <property type="chains" value="A=388-625"/>
</dbReference>
<dbReference type="PDB" id="6TS6">
    <property type="method" value="X-ray"/>
    <property type="resolution" value="1.33 A"/>
    <property type="chains" value="A=388-625"/>
</dbReference>
<dbReference type="PDB" id="6TS7">
    <property type="method" value="X-ray"/>
    <property type="resolution" value="2.63 A"/>
    <property type="chains" value="A=388-625"/>
</dbReference>
<dbReference type="PDB" id="6TWB">
    <property type="method" value="X-ray"/>
    <property type="resolution" value="2.91 A"/>
    <property type="chains" value="A/H=375-625"/>
</dbReference>
<dbReference type="PDB" id="6USY">
    <property type="method" value="X-ray"/>
    <property type="resolution" value="1.26 A"/>
    <property type="chains" value="A=388-625"/>
</dbReference>
<dbReference type="PDB" id="6VLU">
    <property type="method" value="X-ray"/>
    <property type="resolution" value="1.60 A"/>
    <property type="chains" value="A=388-625"/>
</dbReference>
<dbReference type="PDB" id="6VLV">
    <property type="method" value="X-ray"/>
    <property type="resolution" value="1.72 A"/>
    <property type="chains" value="A=388-625"/>
</dbReference>
<dbReference type="PDB" id="6W50">
    <property type="method" value="X-ray"/>
    <property type="resolution" value="1.95 A"/>
    <property type="chains" value="A=388-625"/>
</dbReference>
<dbReference type="PDB" id="7CJ1">
    <property type="method" value="X-ray"/>
    <property type="resolution" value="3.00 A"/>
    <property type="chains" value="A/B/C/D=388-623"/>
</dbReference>
<dbReference type="PDB" id="7MBO">
    <property type="method" value="X-ray"/>
    <property type="resolution" value="0.92 A"/>
    <property type="chains" value="A=388-625"/>
</dbReference>
<dbReference type="PDB" id="7QOT">
    <property type="method" value="X-ray"/>
    <property type="resolution" value="3.24 A"/>
    <property type="chains" value="A/B=19-376"/>
</dbReference>
<dbReference type="PDB" id="7V0Z">
    <property type="method" value="X-ray"/>
    <property type="resolution" value="1.80 A"/>
    <property type="chains" value="A=388-625"/>
</dbReference>
<dbReference type="PDB" id="7V10">
    <property type="method" value="X-ray"/>
    <property type="resolution" value="1.80 A"/>
    <property type="chains" value="A=388-625"/>
</dbReference>
<dbReference type="PDB" id="7V11">
    <property type="method" value="X-ray"/>
    <property type="resolution" value="1.47 A"/>
    <property type="chains" value="A=388-625"/>
</dbReference>
<dbReference type="PDB" id="7V12">
    <property type="method" value="X-ray"/>
    <property type="resolution" value="1.63 A"/>
    <property type="chains" value="A=388-625"/>
</dbReference>
<dbReference type="PDB" id="7V13">
    <property type="method" value="X-ray"/>
    <property type="resolution" value="1.59 A"/>
    <property type="chains" value="A=388-625"/>
</dbReference>
<dbReference type="PDB" id="7V14">
    <property type="method" value="X-ray"/>
    <property type="resolution" value="1.70 A"/>
    <property type="chains" value="A=388-625"/>
</dbReference>
<dbReference type="PDB" id="7V15">
    <property type="method" value="X-ray"/>
    <property type="resolution" value="1.68 A"/>
    <property type="chains" value="A=388-625"/>
</dbReference>
<dbReference type="PDB" id="7V16">
    <property type="method" value="X-ray"/>
    <property type="resolution" value="1.50 A"/>
    <property type="chains" value="A=388-625"/>
</dbReference>
<dbReference type="PDB" id="7V17">
    <property type="method" value="X-ray"/>
    <property type="resolution" value="1.52 A"/>
    <property type="chains" value="A=388-625"/>
</dbReference>
<dbReference type="PDB" id="7V18">
    <property type="method" value="X-ray"/>
    <property type="resolution" value="1.73 A"/>
    <property type="chains" value="A=388-625"/>
</dbReference>
<dbReference type="PDB" id="8BO3">
    <property type="method" value="X-ray"/>
    <property type="resolution" value="1.84 A"/>
    <property type="chains" value="AAA=388-625"/>
</dbReference>
<dbReference type="PDB" id="8BO4">
    <property type="method" value="X-ray"/>
    <property type="resolution" value="1.75 A"/>
    <property type="chains" value="AAA=388-625"/>
</dbReference>
<dbReference type="PDB" id="8BO5">
    <property type="method" value="X-ray"/>
    <property type="resolution" value="1.70 A"/>
    <property type="chains" value="AAA=388-625"/>
</dbReference>
<dbReference type="PDB" id="8BO6">
    <property type="method" value="X-ray"/>
    <property type="resolution" value="1.25 A"/>
    <property type="chains" value="AAA=388-625"/>
</dbReference>
<dbReference type="PDB" id="8BO7">
    <property type="method" value="X-ray"/>
    <property type="resolution" value="1.25 A"/>
    <property type="chains" value="AAA=388-625"/>
</dbReference>
<dbReference type="PDBsum" id="1XX9"/>
<dbReference type="PDBsum" id="1XXD"/>
<dbReference type="PDBsum" id="1XXF"/>
<dbReference type="PDBsum" id="1ZHM"/>
<dbReference type="PDBsum" id="1ZHP"/>
<dbReference type="PDBsum" id="1ZHR"/>
<dbReference type="PDBsum" id="1ZJD"/>
<dbReference type="PDBsum" id="1ZLR"/>
<dbReference type="PDBsum" id="1ZMJ"/>
<dbReference type="PDBsum" id="1ZML"/>
<dbReference type="PDBsum" id="1ZMN"/>
<dbReference type="PDBsum" id="1ZOM"/>
<dbReference type="PDBsum" id="1ZPB"/>
<dbReference type="PDBsum" id="1ZPC"/>
<dbReference type="PDBsum" id="1ZPZ"/>
<dbReference type="PDBsum" id="1ZRK"/>
<dbReference type="PDBsum" id="1ZSJ"/>
<dbReference type="PDBsum" id="1ZSK"/>
<dbReference type="PDBsum" id="1ZSL"/>
<dbReference type="PDBsum" id="1ZTJ"/>
<dbReference type="PDBsum" id="1ZTK"/>
<dbReference type="PDBsum" id="1ZTL"/>
<dbReference type="PDBsum" id="2FDA"/>
<dbReference type="PDBsum" id="2J8J"/>
<dbReference type="PDBsum" id="2J8L"/>
<dbReference type="PDBsum" id="3BG8"/>
<dbReference type="PDBsum" id="3SOR"/>
<dbReference type="PDBsum" id="3SOS"/>
<dbReference type="PDBsum" id="4CR5"/>
<dbReference type="PDBsum" id="4CR9"/>
<dbReference type="PDBsum" id="4CRA"/>
<dbReference type="PDBsum" id="4CRB"/>
<dbReference type="PDBsum" id="4CRC"/>
<dbReference type="PDBsum" id="4CRD"/>
<dbReference type="PDBsum" id="4CRE"/>
<dbReference type="PDBsum" id="4CRF"/>
<dbReference type="PDBsum" id="4CRG"/>
<dbReference type="PDBsum" id="4D76"/>
<dbReference type="PDBsum" id="4D7F"/>
<dbReference type="PDBsum" id="4D7G"/>
<dbReference type="PDBsum" id="4NA7"/>
<dbReference type="PDBsum" id="4NA8"/>
<dbReference type="PDBsum" id="4TY6"/>
<dbReference type="PDBsum" id="4TY7"/>
<dbReference type="PDBsum" id="4WXI"/>
<dbReference type="PDBsum" id="4X6M"/>
<dbReference type="PDBsum" id="4X6N"/>
<dbReference type="PDBsum" id="4X6O"/>
<dbReference type="PDBsum" id="4X6P"/>
<dbReference type="PDBsum" id="4Y8X"/>
<dbReference type="PDBsum" id="4Y8Y"/>
<dbReference type="PDBsum" id="4Y8Z"/>
<dbReference type="PDBsum" id="5E2O"/>
<dbReference type="PDBsum" id="5E2P"/>
<dbReference type="PDBsum" id="5EOD"/>
<dbReference type="PDBsum" id="5EOK"/>
<dbReference type="PDBsum" id="5EXL"/>
<dbReference type="PDBsum" id="5EXM"/>
<dbReference type="PDBsum" id="5EXN"/>
<dbReference type="PDBsum" id="5I25"/>
<dbReference type="PDBsum" id="5Q0D"/>
<dbReference type="PDBsum" id="5Q0E"/>
<dbReference type="PDBsum" id="5Q0F"/>
<dbReference type="PDBsum" id="5Q0G"/>
<dbReference type="PDBsum" id="5Q0H"/>
<dbReference type="PDBsum" id="5QCK"/>
<dbReference type="PDBsum" id="5QCL"/>
<dbReference type="PDBsum" id="5QCM"/>
<dbReference type="PDBsum" id="5QCN"/>
<dbReference type="PDBsum" id="5QQO"/>
<dbReference type="PDBsum" id="5QQP"/>
<dbReference type="PDBsum" id="5QTT"/>
<dbReference type="PDBsum" id="5QTV"/>
<dbReference type="PDBsum" id="5QTW"/>
<dbReference type="PDBsum" id="5QTY"/>
<dbReference type="PDBsum" id="5TKS"/>
<dbReference type="PDBsum" id="5TKT"/>
<dbReference type="PDBsum" id="5TKU"/>
<dbReference type="PDBsum" id="5WB6"/>
<dbReference type="PDBsum" id="6AOD"/>
<dbReference type="PDBsum" id="6C0S"/>
<dbReference type="PDBsum" id="6HHC"/>
<dbReference type="PDBsum" id="6I58"/>
<dbReference type="PDBsum" id="6R8X"/>
<dbReference type="PDBsum" id="6TS4"/>
<dbReference type="PDBsum" id="6TS5"/>
<dbReference type="PDBsum" id="6TS6"/>
<dbReference type="PDBsum" id="6TS7"/>
<dbReference type="PDBsum" id="6TWB"/>
<dbReference type="PDBsum" id="6USY"/>
<dbReference type="PDBsum" id="6VLU"/>
<dbReference type="PDBsum" id="6VLV"/>
<dbReference type="PDBsum" id="6W50"/>
<dbReference type="PDBsum" id="7CJ1"/>
<dbReference type="PDBsum" id="7MBO"/>
<dbReference type="PDBsum" id="7QOT"/>
<dbReference type="PDBsum" id="7V0Z"/>
<dbReference type="PDBsum" id="7V10"/>
<dbReference type="PDBsum" id="7V11"/>
<dbReference type="PDBsum" id="7V12"/>
<dbReference type="PDBsum" id="7V13"/>
<dbReference type="PDBsum" id="7V14"/>
<dbReference type="PDBsum" id="7V15"/>
<dbReference type="PDBsum" id="7V16"/>
<dbReference type="PDBsum" id="7V17"/>
<dbReference type="PDBsum" id="7V18"/>
<dbReference type="PDBsum" id="8BO3"/>
<dbReference type="PDBsum" id="8BO4"/>
<dbReference type="PDBsum" id="8BO5"/>
<dbReference type="PDBsum" id="8BO6"/>
<dbReference type="PDBsum" id="8BO7"/>
<dbReference type="SMR" id="P03951"/>
<dbReference type="BioGRID" id="108458">
    <property type="interactions" value="9"/>
</dbReference>
<dbReference type="ComplexPortal" id="CPX-6205">
    <property type="entry name" value="Coagulation factor XIa complex"/>
</dbReference>
<dbReference type="DIP" id="DIP-29085N"/>
<dbReference type="FunCoup" id="P03951">
    <property type="interactions" value="150"/>
</dbReference>
<dbReference type="IntAct" id="P03951">
    <property type="interactions" value="10"/>
</dbReference>
<dbReference type="STRING" id="9606.ENSP00000384957"/>
<dbReference type="BindingDB" id="P03951"/>
<dbReference type="ChEMBL" id="CHEMBL2820"/>
<dbReference type="DrugBank" id="DB07023">
    <property type="generic name" value="(1R)-2-[(Diaminomethylene)amino]-1-{4-[(4R)-4-(hydroxymethyl)-1,3,2-dioxaborolan-2-yl]phenyl}ethyl nicotinate"/>
</dbReference>
<dbReference type="DrugBank" id="DB07887">
    <property type="generic name" value="(R)-1-(4-(4-(hydroxymethyl)-1,3,2-dioxaborolan-2-yl)benzyl)guanidine"/>
</dbReference>
<dbReference type="DrugBank" id="DB07071">
    <property type="generic name" value="(R)-1-(4-(4-(Hydroxymethyl)-1,3,2-dioxaborolan-2-YL)phenethyl)guanidine"/>
</dbReference>
<dbReference type="DrugBank" id="DB07077">
    <property type="generic name" value="(R)-1-(4-(4-(Hydroxymethyl)-1,3,2-dioxaborolan-2-YL)phenyl)guanidine"/>
</dbReference>
<dbReference type="DrugBank" id="DB07022">
    <property type="generic name" value="3-Hydroxypropyl 3-[(7-carbamimidoyl-1-naphthyl)carbamoyl]benzenesulfonate"/>
</dbReference>
<dbReference type="DrugBank" id="DB07299">
    <property type="generic name" value="4-METHYL-PENTANOIC ACID {1-[4-GUANIDINO-1-(THIAZOLE-2-CARBONYL)-BUTYLCARBAMOYL]-2-METHYL-PROPYL}-AMIDE"/>
</dbReference>
<dbReference type="DrugBank" id="DB07074">
    <property type="generic name" value="6-CARBAMIMIDOYL-4-(3-HYDROXY-2-METHYL-BENZOYLAMINO)-NAPHTHALENE-2-CARBOXYLIC ACID METHYL ESTER"/>
</dbReference>
<dbReference type="DrugBank" id="DB19088">
    <property type="generic name" value="Asundexian"/>
</dbReference>
<dbReference type="DrugBank" id="DB00100">
    <property type="generic name" value="Coagulation Factor IX (Recombinant)"/>
</dbReference>
<dbReference type="DrugBank" id="DB13152">
    <property type="generic name" value="Coagulation Factor IX Human"/>
</dbReference>
<dbReference type="DrugBank" id="DB09228">
    <property type="generic name" value="Conestat alfa"/>
</dbReference>
<dbReference type="DrugBank" id="DB06404">
    <property type="generic name" value="Human C1-esterase inhibitor"/>
</dbReference>
<dbReference type="DrugBank" id="DB11571">
    <property type="generic name" value="Human thrombin"/>
</dbReference>
<dbReference type="DrugBank" id="DB16233">
    <property type="generic name" value="Milvexian"/>
</dbReference>
<dbReference type="DrugBank" id="DB07212">
    <property type="generic name" value="N-(7-CARBAMIMIDOYL-NAPHTHALEN-1-YL)-3-HYDROXY-2-METHYL-BENZAMIDE"/>
</dbReference>
<dbReference type="DrugBank" id="DB11300">
    <property type="generic name" value="Thrombin"/>
</dbReference>
<dbReference type="DrugBank" id="DB14533">
    <property type="generic name" value="Zinc chloride"/>
</dbReference>
<dbReference type="DrugBank" id="DB14548">
    <property type="generic name" value="Zinc sulfate, unspecified form"/>
</dbReference>
<dbReference type="DrugCentral" id="P03951"/>
<dbReference type="GuidetoPHARMACOLOGY" id="2360"/>
<dbReference type="MEROPS" id="S01.213"/>
<dbReference type="GlyConnect" id="818">
    <property type="glycosylation" value="21 N-Linked glycans (5 sites)"/>
</dbReference>
<dbReference type="GlyCosmos" id="P03951">
    <property type="glycosylation" value="5 sites, 27 glycans"/>
</dbReference>
<dbReference type="GlyGen" id="P03951">
    <property type="glycosylation" value="5 sites, 43 N-linked glycans (5 sites)"/>
</dbReference>
<dbReference type="iPTMnet" id="P03951"/>
<dbReference type="PhosphoSitePlus" id="P03951"/>
<dbReference type="BioMuta" id="F11"/>
<dbReference type="DMDM" id="119762"/>
<dbReference type="MassIVE" id="P03951"/>
<dbReference type="PaxDb" id="9606-ENSP00000384957"/>
<dbReference type="PeptideAtlas" id="P03951"/>
<dbReference type="ProteomicsDB" id="51620">
    <molecule id="P03951-1"/>
</dbReference>
<dbReference type="ProteomicsDB" id="51621">
    <molecule id="P03951-2"/>
</dbReference>
<dbReference type="ABCD" id="P03951">
    <property type="antibodies" value="53 sequenced antibodies"/>
</dbReference>
<dbReference type="Antibodypedia" id="17547">
    <property type="antibodies" value="577 antibodies from 35 providers"/>
</dbReference>
<dbReference type="DNASU" id="2160"/>
<dbReference type="Ensembl" id="ENST00000403665.7">
    <molecule id="P03951-1"/>
    <property type="protein sequence ID" value="ENSP00000384957.2"/>
    <property type="gene ID" value="ENSG00000088926.15"/>
</dbReference>
<dbReference type="GeneID" id="2160"/>
<dbReference type="KEGG" id="hsa:2160"/>
<dbReference type="MANE-Select" id="ENST00000403665.7">
    <property type="protein sequence ID" value="ENSP00000384957.2"/>
    <property type="RefSeq nucleotide sequence ID" value="NM_000128.4"/>
    <property type="RefSeq protein sequence ID" value="NP_000119.1"/>
</dbReference>
<dbReference type="UCSC" id="uc003iza.2">
    <molecule id="P03951-1"/>
    <property type="organism name" value="human"/>
</dbReference>
<dbReference type="AGR" id="HGNC:3529"/>
<dbReference type="CTD" id="2160"/>
<dbReference type="DisGeNET" id="2160"/>
<dbReference type="GeneCards" id="F11"/>
<dbReference type="HGNC" id="HGNC:3529">
    <property type="gene designation" value="F11"/>
</dbReference>
<dbReference type="HPA" id="ENSG00000088926">
    <property type="expression patterns" value="Tissue enriched (liver)"/>
</dbReference>
<dbReference type="MalaCards" id="F11"/>
<dbReference type="MIM" id="264900">
    <property type="type" value="gene"/>
</dbReference>
<dbReference type="MIM" id="612416">
    <property type="type" value="phenotype"/>
</dbReference>
<dbReference type="neXtProt" id="NX_P03951"/>
<dbReference type="OpenTargets" id="ENSG00000088926"/>
<dbReference type="Orphanet" id="329">
    <property type="disease" value="Congenital factor XI deficiency"/>
</dbReference>
<dbReference type="PharmGKB" id="PA27941"/>
<dbReference type="VEuPathDB" id="HostDB:ENSG00000088926"/>
<dbReference type="eggNOG" id="KOG3627">
    <property type="taxonomic scope" value="Eukaryota"/>
</dbReference>
<dbReference type="GeneTree" id="ENSGT00940000158569"/>
<dbReference type="HOGENOM" id="CLU_031604_0_0_1"/>
<dbReference type="InParanoid" id="P03951"/>
<dbReference type="OMA" id="QNCRHSV"/>
<dbReference type="OrthoDB" id="9448935at2759"/>
<dbReference type="PAN-GO" id="P03951">
    <property type="GO annotations" value="0 GO annotations based on evolutionary models"/>
</dbReference>
<dbReference type="PhylomeDB" id="P03951"/>
<dbReference type="TreeFam" id="TF343687"/>
<dbReference type="BioCyc" id="MetaCyc:HS01617-MONOMER"/>
<dbReference type="BRENDA" id="3.4.21.27">
    <property type="organism ID" value="2681"/>
</dbReference>
<dbReference type="PathwayCommons" id="P03951"/>
<dbReference type="Reactome" id="R-HSA-140837">
    <property type="pathway name" value="Intrinsic Pathway of Fibrin Clot Formation"/>
</dbReference>
<dbReference type="Reactome" id="R-HSA-9673221">
    <property type="pathway name" value="Defective F9 activation"/>
</dbReference>
<dbReference type="SABIO-RK" id="P03951"/>
<dbReference type="SignaLink" id="P03951"/>
<dbReference type="SIGNOR" id="P03951"/>
<dbReference type="BioGRID-ORCS" id="2160">
    <property type="hits" value="13 hits in 1164 CRISPR screens"/>
</dbReference>
<dbReference type="ChiTaRS" id="F11">
    <property type="organism name" value="human"/>
</dbReference>
<dbReference type="EvolutionaryTrace" id="P03951"/>
<dbReference type="GeneWiki" id="Factor_XI"/>
<dbReference type="GenomeRNAi" id="2160"/>
<dbReference type="Pharos" id="P03951">
    <property type="development level" value="Tchem"/>
</dbReference>
<dbReference type="PRO" id="PR:P03951"/>
<dbReference type="Proteomes" id="UP000005640">
    <property type="component" value="Chromosome 4"/>
</dbReference>
<dbReference type="RNAct" id="P03951">
    <property type="molecule type" value="protein"/>
</dbReference>
<dbReference type="Bgee" id="ENSG00000088926">
    <property type="expression patterns" value="Expressed in right lobe of liver and 123 other cell types or tissues"/>
</dbReference>
<dbReference type="ExpressionAtlas" id="P03951">
    <property type="expression patterns" value="baseline and differential"/>
</dbReference>
<dbReference type="GO" id="GO:0070062">
    <property type="term" value="C:extracellular exosome"/>
    <property type="evidence" value="ECO:0007005"/>
    <property type="project" value="UniProtKB"/>
</dbReference>
<dbReference type="GO" id="GO:0005576">
    <property type="term" value="C:extracellular region"/>
    <property type="evidence" value="ECO:0000304"/>
    <property type="project" value="Reactome"/>
</dbReference>
<dbReference type="GO" id="GO:0005615">
    <property type="term" value="C:extracellular space"/>
    <property type="evidence" value="ECO:0000314"/>
    <property type="project" value="BHF-UCL"/>
</dbReference>
<dbReference type="GO" id="GO:0016020">
    <property type="term" value="C:membrane"/>
    <property type="evidence" value="ECO:0000303"/>
    <property type="project" value="UniProtKB"/>
</dbReference>
<dbReference type="GO" id="GO:0005886">
    <property type="term" value="C:plasma membrane"/>
    <property type="evidence" value="ECO:0000304"/>
    <property type="project" value="Reactome"/>
</dbReference>
<dbReference type="GO" id="GO:0008201">
    <property type="term" value="F:heparin binding"/>
    <property type="evidence" value="ECO:0007669"/>
    <property type="project" value="UniProtKB-KW"/>
</dbReference>
<dbReference type="GO" id="GO:0042802">
    <property type="term" value="F:identical protein binding"/>
    <property type="evidence" value="ECO:0000353"/>
    <property type="project" value="IntAct"/>
</dbReference>
<dbReference type="GO" id="GO:0070009">
    <property type="term" value="F:serine-type aminopeptidase activity"/>
    <property type="evidence" value="ECO:0007669"/>
    <property type="project" value="Ensembl"/>
</dbReference>
<dbReference type="GO" id="GO:0004252">
    <property type="term" value="F:serine-type endopeptidase activity"/>
    <property type="evidence" value="ECO:0000304"/>
    <property type="project" value="ProtInc"/>
</dbReference>
<dbReference type="GO" id="GO:0007596">
    <property type="term" value="P:blood coagulation"/>
    <property type="evidence" value="ECO:0000314"/>
    <property type="project" value="BHF-UCL"/>
</dbReference>
<dbReference type="GO" id="GO:0031639">
    <property type="term" value="P:plasminogen activation"/>
    <property type="evidence" value="ECO:0000314"/>
    <property type="project" value="BHF-UCL"/>
</dbReference>
<dbReference type="GO" id="GO:0051919">
    <property type="term" value="P:positive regulation of fibrinolysis"/>
    <property type="evidence" value="ECO:0000314"/>
    <property type="project" value="BHF-UCL"/>
</dbReference>
<dbReference type="CDD" id="cd01100">
    <property type="entry name" value="APPLE_Factor_XI_like"/>
    <property type="match status" value="4"/>
</dbReference>
<dbReference type="CDD" id="cd00190">
    <property type="entry name" value="Tryp_SPc"/>
    <property type="match status" value="1"/>
</dbReference>
<dbReference type="FunFam" id="3.50.4.10:FF:000001">
    <property type="entry name" value="Coagulation factor XI"/>
    <property type="match status" value="3"/>
</dbReference>
<dbReference type="FunFam" id="2.40.10.10:FF:000002">
    <property type="entry name" value="Transmembrane protease serine"/>
    <property type="match status" value="1"/>
</dbReference>
<dbReference type="Gene3D" id="3.50.4.10">
    <property type="entry name" value="Hepatocyte Growth Factor"/>
    <property type="match status" value="4"/>
</dbReference>
<dbReference type="Gene3D" id="2.40.10.10">
    <property type="entry name" value="Trypsin-like serine proteases"/>
    <property type="match status" value="2"/>
</dbReference>
<dbReference type="InterPro" id="IPR000177">
    <property type="entry name" value="Apple"/>
</dbReference>
<dbReference type="InterPro" id="IPR003609">
    <property type="entry name" value="Pan_app"/>
</dbReference>
<dbReference type="InterPro" id="IPR009003">
    <property type="entry name" value="Peptidase_S1_PA"/>
</dbReference>
<dbReference type="InterPro" id="IPR043504">
    <property type="entry name" value="Peptidase_S1_PA_chymotrypsin"/>
</dbReference>
<dbReference type="InterPro" id="IPR001314">
    <property type="entry name" value="Peptidase_S1A"/>
</dbReference>
<dbReference type="InterPro" id="IPR001254">
    <property type="entry name" value="Trypsin_dom"/>
</dbReference>
<dbReference type="InterPro" id="IPR018114">
    <property type="entry name" value="TRYPSIN_HIS"/>
</dbReference>
<dbReference type="InterPro" id="IPR033116">
    <property type="entry name" value="TRYPSIN_SER"/>
</dbReference>
<dbReference type="PANTHER" id="PTHR24252">
    <property type="entry name" value="ACROSIN-RELATED"/>
    <property type="match status" value="1"/>
</dbReference>
<dbReference type="PANTHER" id="PTHR24252:SF27">
    <property type="entry name" value="TRANSMEMBRANE PROTEASE SERINE 3-LIKE"/>
    <property type="match status" value="1"/>
</dbReference>
<dbReference type="Pfam" id="PF00024">
    <property type="entry name" value="PAN_1"/>
    <property type="match status" value="4"/>
</dbReference>
<dbReference type="Pfam" id="PF00089">
    <property type="entry name" value="Trypsin"/>
    <property type="match status" value="1"/>
</dbReference>
<dbReference type="PRINTS" id="PR00005">
    <property type="entry name" value="APPLEDOMAIN"/>
</dbReference>
<dbReference type="PRINTS" id="PR00722">
    <property type="entry name" value="CHYMOTRYPSIN"/>
</dbReference>
<dbReference type="SMART" id="SM00223">
    <property type="entry name" value="APPLE"/>
    <property type="match status" value="4"/>
</dbReference>
<dbReference type="SMART" id="SM00020">
    <property type="entry name" value="Tryp_SPc"/>
    <property type="match status" value="1"/>
</dbReference>
<dbReference type="SUPFAM" id="SSF50494">
    <property type="entry name" value="Trypsin-like serine proteases"/>
    <property type="match status" value="1"/>
</dbReference>
<dbReference type="PROSITE" id="PS00495">
    <property type="entry name" value="APPLE"/>
    <property type="match status" value="4"/>
</dbReference>
<dbReference type="PROSITE" id="PS50948">
    <property type="entry name" value="PAN"/>
    <property type="match status" value="4"/>
</dbReference>
<dbReference type="PROSITE" id="PS50240">
    <property type="entry name" value="TRYPSIN_DOM"/>
    <property type="match status" value="1"/>
</dbReference>
<dbReference type="PROSITE" id="PS00134">
    <property type="entry name" value="TRYPSIN_HIS"/>
    <property type="match status" value="1"/>
</dbReference>
<dbReference type="PROSITE" id="PS00135">
    <property type="entry name" value="TRYPSIN_SER"/>
    <property type="match status" value="1"/>
</dbReference>
<sequence length="625" mass="70109">MIFLYQVVHFILFTSVSGECVTQLLKDTCFEGGDITTVFTPSAKYCQVVCTYHPRCLLFTFTAESPSEDPTRWFTCVLKDSVTETLPRVNRTAAISGYSFKQCSHQISACNKDIYVDLDMKGINYNSSVAKSAQECQERCTDDVHCHFFTYATRQFPSLEHRNICLLKHTQTGTPTRITKLDKVVSGFSLKSCALSNLACIRDIFPNTVFADSNIDSVMAPDAFVCGRICTHHPGCLFFTFFSQEWPKESQRNLCLLKTSESGLPSTRIKKSKALSGFSLQSCRHSIPVFCHSSFYHDTDFLGEELDIVAAKSHEACQKLCTNAVRCQFFTYTPAQASCNEGKGKCYLKLSSNGSPTKILHGRGGISGYTLRLCKMDNECTTKIKPRIVGGTASVRGEWPWQVTLHTTSPTQRHLCGGSIIGNQWILTAAHCFYGVESPKILRVYSGILNQSEIKEDTSFFGVQEIIIHDQYKMAESGYDIALLKLETTVNYTDSQRPICLPSKGDRNVIYTDCWVTGWGYRKLRDKIQNTLQKAKIPLVTNEECQKRYRGHKITHKMICAGYREGGKDACKGDSGGPLSCKHNEVWHLVGITSWGEGCAQRERPGVYTNVVEYVDWILEKTQAV</sequence>
<name>FA11_HUMAN</name>
<keyword id="KW-0002">3D-structure</keyword>
<keyword id="KW-0025">Alternative splicing</keyword>
<keyword id="KW-0094">Blood coagulation</keyword>
<keyword id="KW-0903">Direct protein sequencing</keyword>
<keyword id="KW-0225">Disease variant</keyword>
<keyword id="KW-1015">Disulfide bond</keyword>
<keyword id="KW-0325">Glycoprotein</keyword>
<keyword id="KW-0356">Hemostasis</keyword>
<keyword id="KW-0358">Heparin-binding</keyword>
<keyword id="KW-0378">Hydrolase</keyword>
<keyword id="KW-0645">Protease</keyword>
<keyword id="KW-1267">Proteomics identification</keyword>
<keyword id="KW-1185">Reference proteome</keyword>
<keyword id="KW-0677">Repeat</keyword>
<keyword id="KW-0964">Secreted</keyword>
<keyword id="KW-0720">Serine protease</keyword>
<keyword id="KW-0732">Signal</keyword>
<keyword id="KW-0865">Zymogen</keyword>
<comment type="function">
    <text evidence="27">Factor XI triggers the middle phase of the intrinsic pathway of blood coagulation by activating factor IX.</text>
</comment>
<comment type="catalytic activity">
    <reaction evidence="27">
        <text>Selective cleavage of Arg-|-Ala and Arg-|-Val bonds in factor IX to form factor IXa.</text>
        <dbReference type="EC" id="3.4.21.27"/>
    </reaction>
</comment>
<comment type="activity regulation">
    <text evidence="31">Inhibited by SERPINA5.</text>
</comment>
<comment type="biophysicochemical properties">
    <kinetics>
        <KM evidence="27">0.27 uM for cleavage after 'Arg-191' in F9 (in the presence of 5 mM CaCl(2), from initial velocities)</KM>
        <KM evidence="27">0.09 uM for cleavage after 'Arg-226' in F9 cleaved at 'Arg-191' (in the presence of 5 mM CaCl(2), from initial velocities)</KM>
        <KM evidence="27">1.8 uM for cleavage after 'Arg-191' in F9 (in the absence of Ca(2+), from initial velocities)</KM>
        <KM evidence="27">0.08 uM for cleavage after 'Arg-226' in F9 (in the presence of 5 mM CaCl(2), from full-progress experimental traces)</KM>
        <KM evidence="27">0.09 uM for cleavage after 'Arg-226' in F9 cleaved at 'Arg-191' (in the presence of 5 mM CaCl(2), from full-progress experimental traces)</KM>
        <KM evidence="27">15.1 uM for cleavage after 'Arg-226' in F9 (in the absence of Ca(2+), from full-progress experimental traces)</KM>
        <KM evidence="27">0.2 uM for cleavage after 'Arg-191' in F9 (in the presence of 5 mM CaCl(2), from full-progress experimental traces)</KM>
        <KM evidence="27">4.9 uM for cleavage after 'Arg-191' in F9 (in the absence of Ca(2+), from full-progress experimental traces)</KM>
        <text evidence="27">kcat is 10 min(-1) for cleavage after 'Arg-191' in F9 (in the presence of 5 mM CaCl(2), from initial velocities). kcat is 7.1 min(-1) for cleavage after 'Arg-226' in F9 cleaved at 'Arg-191' (in the presence of 5 mM CaCl(2), from initial velocities). kcat is 4.6 min(-1) for cleavage after 'Arg-191' in F9 (in the absence of Ca(2+), from initial velocities). kcat is 35 min(-1) for cleavage after 'Arg-226' in F9 (in the presence of 5 mM CaCl(2), from full-progress experimental traces). kcat is 12 min(-1) for cleavage after 'Arg-226' in F9 cleaved at 'Arg-191' (in the presence of 5 mM CaCl(2), from full-progress experimental traces). kcat is 3.6 min(-1) for cleavage after 'Arg-226' in F9 (in the absence of Ca(2+), from full-progress experimental traces). kcat is 12 min(-1) for cleavage after 'Arg-191' in F9 (in the presence of 5 mM CaCl(2), from full-progress experimental traces). kcat is 6.5 min(-1) for cleavage after 'Arg-191' in F9 (in the absence of Ca(2+), from full-progress experimental traces).</text>
    </kinetics>
</comment>
<comment type="subunit">
    <text evidence="15 18 27 32 33">Homodimer; disulfide-linked (PubMed:19548906, PubMed:22961984). Can form non-covalently bonded homodimers (PubMed:19548906). After activation the heavy and light chains are also linked by a disulfide bond (PubMed:22961984). Interacts (activated) with F9 (inactive and activated) in calcium-dependent manner (PubMed:22961984). Forms a heterodimer with SERPINA5 (PubMed:2844223). Interacts with Anopheles gambiae D7L2 (PubMed:35460690). Interacts (activated) with guianensin, an anticoagulant protein from Simulium guianense saliva (PubMed:37469515).</text>
</comment>
<comment type="interaction">
    <interactant intactId="EBI-1041019">
        <id>P03951</id>
    </interactant>
    <interactant intactId="EBI-1029159">
        <id>P23827</id>
        <label>eco</label>
    </interactant>
    <organismsDiffer>true</organismsDiffer>
    <experiments>3</experiments>
</comment>
<comment type="interaction">
    <interactant intactId="EBI-15583061">
        <id>P03951-1</id>
    </interactant>
    <interactant intactId="EBI-15583061">
        <id>P03951-1</id>
        <label>F11</label>
    </interactant>
    <organismsDiffer>false</organismsDiffer>
    <experiments>5</experiments>
</comment>
<comment type="subcellular location">
    <subcellularLocation>
        <location>Secreted</location>
    </subcellularLocation>
</comment>
<comment type="alternative products">
    <event type="alternative splicing"/>
    <isoform>
        <id>P03951-1</id>
        <name>1</name>
        <sequence type="displayed"/>
    </isoform>
    <isoform>
        <id>P03951-2</id>
        <name>2</name>
        <name>Platelet</name>
        <sequence type="described" ref="VSP_005388"/>
    </isoform>
</comment>
<comment type="tissue specificity">
    <text>Isoform 2 is produced by platelets and megakaryocytes but absent from other blood cells.</text>
</comment>
<comment type="PTM">
    <text evidence="28">N-glycosylated on both chains. N-glycosylated sites mainly consist of nonfucosylated sialylated biantennary (in high abundance) and/or triantennary (in low abundance) complex structures. Glycosylation at Asn-163 uses a rare non-canonical Asn-X-Cys glycosite.</text>
</comment>
<comment type="PTM">
    <text evidence="19 22 36">Activated by factor XIIa (or XII), which cleaves each polypeptide after Arg-387 into the light chain, which contains the active site, and the heavy chain, which associates with high molecular weight (HMW) kininogen. Activated by F12 (activated); the presence of negatively charged surfaces accelerates activation (PubMed:2019570, PubMed:8427954). Activated by F2 (thrombin); the presence of negatively charged surfaces, such as polyphosphate and dextran sulfate, strongly accelerates activation (PubMed:2019570, PubMed:21976677). Autoactivated; the presence of negatively charged surfaces, such as polyphosphate and dextran sulfate, accelerates autoactivation and autolysis (PubMed:2019570, PubMed:21976677).</text>
</comment>
<comment type="disease" evidence="4 6 7 8 9 10 11 13 14 20 21 23 24 25 26 29 30 34 35 37 38">
    <disease id="DI-01542">
        <name>Factor XI deficiency</name>
        <acronym>FA11D</acronym>
        <description>A hemorrhagic disease characterized by reduced levels and activity of factor XI resulting in moderate bleeding symptoms, usually occurring after trauma or surgery. Patients usually do not present spontaneous bleeding but women can present with menorrhagia. Hemorrhages are usually moderate.</description>
        <dbReference type="MIM" id="612416"/>
    </disease>
    <text>The disease is caused by variants affecting the gene represented in this entry.</text>
</comment>
<comment type="similarity">
    <text evidence="2">Belongs to the peptidase S1 family. Plasma kallikrein subfamily.</text>
</comment>
<comment type="online information" name="Wikipedia">
    <link uri="https://en.wikipedia.org/wiki/Factor_XI"/>
    <text>Factor XI entry</text>
</comment>
<comment type="online information" name="Mendelian genes Coagulation factor XI (F11)">
    <link uri="https://databases.lovd.nl/shared/genes/F11"/>
    <text>Leiden Open Variation Database (LOVD)</text>
</comment>
<reference key="1">
    <citation type="journal article" date="1986" name="Biochemistry">
        <title>Amino acid sequence of human factor XI, a blood coagulation factor with four tandem repeats that are highly homologous with plasma prekallikrein.</title>
        <authorList>
            <person name="Fujikawa K."/>
            <person name="Chung D.W."/>
            <person name="Hendrickson L.E."/>
            <person name="Davie E.W."/>
        </authorList>
    </citation>
    <scope>NUCLEOTIDE SEQUENCE [MRNA] (ISOFORM 1)</scope>
</reference>
<reference key="2">
    <citation type="journal article" date="1987" name="Biochemistry">
        <title>Organization of the gene for human factor XI.</title>
        <authorList>
            <person name="Asakai R."/>
            <person name="Davie E.W."/>
            <person name="Chung D.W."/>
        </authorList>
    </citation>
    <scope>NUCLEOTIDE SEQUENCE [GENOMIC DNA] (ISOFORM 1)</scope>
</reference>
<reference key="3">
    <citation type="journal article" date="1998" name="J. Biol. Chem.">
        <title>Molecular cloning of platelet factor XI, an alternative splicing product of the plasma factor XI gene.</title>
        <authorList>
            <person name="Hsu T.-C."/>
            <person name="Shore S.K."/>
            <person name="Seshsmma T."/>
            <person name="Bagasra O."/>
            <person name="Walsh P.N."/>
        </authorList>
    </citation>
    <scope>NUCLEOTIDE SEQUENCE [MRNA] (ISOFORM 2)</scope>
</reference>
<reference key="4">
    <citation type="submission" date="2002-12" db="EMBL/GenBank/DDBJ databases">
        <authorList>
            <consortium name="SeattleSNPs variation discovery resource"/>
        </authorList>
    </citation>
    <scope>NUCLEOTIDE SEQUENCE [GENOMIC DNA]</scope>
    <scope>VARIANT PHE-339</scope>
</reference>
<reference key="5">
    <citation type="journal article" date="2005" name="Nature">
        <title>Generation and annotation of the DNA sequences of human chromosomes 2 and 4.</title>
        <authorList>
            <person name="Hillier L.W."/>
            <person name="Graves T.A."/>
            <person name="Fulton R.S."/>
            <person name="Fulton L.A."/>
            <person name="Pepin K.H."/>
            <person name="Minx P."/>
            <person name="Wagner-McPherson C."/>
            <person name="Layman D."/>
            <person name="Wylie K."/>
            <person name="Sekhon M."/>
            <person name="Becker M.C."/>
            <person name="Fewell G.A."/>
            <person name="Delehaunty K.D."/>
            <person name="Miner T.L."/>
            <person name="Nash W.E."/>
            <person name="Kremitzki C."/>
            <person name="Oddy L."/>
            <person name="Du H."/>
            <person name="Sun H."/>
            <person name="Bradshaw-Cordum H."/>
            <person name="Ali J."/>
            <person name="Carter J."/>
            <person name="Cordes M."/>
            <person name="Harris A."/>
            <person name="Isak A."/>
            <person name="van Brunt A."/>
            <person name="Nguyen C."/>
            <person name="Du F."/>
            <person name="Courtney L."/>
            <person name="Kalicki J."/>
            <person name="Ozersky P."/>
            <person name="Abbott S."/>
            <person name="Armstrong J."/>
            <person name="Belter E.A."/>
            <person name="Caruso L."/>
            <person name="Cedroni M."/>
            <person name="Cotton M."/>
            <person name="Davidson T."/>
            <person name="Desai A."/>
            <person name="Elliott G."/>
            <person name="Erb T."/>
            <person name="Fronick C."/>
            <person name="Gaige T."/>
            <person name="Haakenson W."/>
            <person name="Haglund K."/>
            <person name="Holmes A."/>
            <person name="Harkins R."/>
            <person name="Kim K."/>
            <person name="Kruchowski S.S."/>
            <person name="Strong C.M."/>
            <person name="Grewal N."/>
            <person name="Goyea E."/>
            <person name="Hou S."/>
            <person name="Levy A."/>
            <person name="Martinka S."/>
            <person name="Mead K."/>
            <person name="McLellan M.D."/>
            <person name="Meyer R."/>
            <person name="Randall-Maher J."/>
            <person name="Tomlinson C."/>
            <person name="Dauphin-Kohlberg S."/>
            <person name="Kozlowicz-Reilly A."/>
            <person name="Shah N."/>
            <person name="Swearengen-Shahid S."/>
            <person name="Snider J."/>
            <person name="Strong J.T."/>
            <person name="Thompson J."/>
            <person name="Yoakum M."/>
            <person name="Leonard S."/>
            <person name="Pearman C."/>
            <person name="Trani L."/>
            <person name="Radionenko M."/>
            <person name="Waligorski J.E."/>
            <person name="Wang C."/>
            <person name="Rock S.M."/>
            <person name="Tin-Wollam A.-M."/>
            <person name="Maupin R."/>
            <person name="Latreille P."/>
            <person name="Wendl M.C."/>
            <person name="Yang S.-P."/>
            <person name="Pohl C."/>
            <person name="Wallis J.W."/>
            <person name="Spieth J."/>
            <person name="Bieri T.A."/>
            <person name="Berkowicz N."/>
            <person name="Nelson J.O."/>
            <person name="Osborne J."/>
            <person name="Ding L."/>
            <person name="Meyer R."/>
            <person name="Sabo A."/>
            <person name="Shotland Y."/>
            <person name="Sinha P."/>
            <person name="Wohldmann P.E."/>
            <person name="Cook L.L."/>
            <person name="Hickenbotham M.T."/>
            <person name="Eldred J."/>
            <person name="Williams D."/>
            <person name="Jones T.A."/>
            <person name="She X."/>
            <person name="Ciccarelli F.D."/>
            <person name="Izaurralde E."/>
            <person name="Taylor J."/>
            <person name="Schmutz J."/>
            <person name="Myers R.M."/>
            <person name="Cox D.R."/>
            <person name="Huang X."/>
            <person name="McPherson J.D."/>
            <person name="Mardis E.R."/>
            <person name="Clifton S.W."/>
            <person name="Warren W.C."/>
            <person name="Chinwalla A.T."/>
            <person name="Eddy S.R."/>
            <person name="Marra M.A."/>
            <person name="Ovcharenko I."/>
            <person name="Furey T.S."/>
            <person name="Miller W."/>
            <person name="Eichler E.E."/>
            <person name="Bork P."/>
            <person name="Suyama M."/>
            <person name="Torrents D."/>
            <person name="Waterston R.H."/>
            <person name="Wilson R.K."/>
        </authorList>
    </citation>
    <scope>NUCLEOTIDE SEQUENCE [LARGE SCALE GENOMIC DNA]</scope>
</reference>
<reference key="6">
    <citation type="submission" date="2005-09" db="EMBL/GenBank/DDBJ databases">
        <authorList>
            <person name="Mural R.J."/>
            <person name="Istrail S."/>
            <person name="Sutton G.G."/>
            <person name="Florea L."/>
            <person name="Halpern A.L."/>
            <person name="Mobarry C.M."/>
            <person name="Lippert R."/>
            <person name="Walenz B."/>
            <person name="Shatkay H."/>
            <person name="Dew I."/>
            <person name="Miller J.R."/>
            <person name="Flanigan M.J."/>
            <person name="Edwards N.J."/>
            <person name="Bolanos R."/>
            <person name="Fasulo D."/>
            <person name="Halldorsson B.V."/>
            <person name="Hannenhalli S."/>
            <person name="Turner R."/>
            <person name="Yooseph S."/>
            <person name="Lu F."/>
            <person name="Nusskern D.R."/>
            <person name="Shue B.C."/>
            <person name="Zheng X.H."/>
            <person name="Zhong F."/>
            <person name="Delcher A.L."/>
            <person name="Huson D.H."/>
            <person name="Kravitz S.A."/>
            <person name="Mouchard L."/>
            <person name="Reinert K."/>
            <person name="Remington K.A."/>
            <person name="Clark A.G."/>
            <person name="Waterman M.S."/>
            <person name="Eichler E.E."/>
            <person name="Adams M.D."/>
            <person name="Hunkapiller M.W."/>
            <person name="Myers E.W."/>
            <person name="Venter J.C."/>
        </authorList>
    </citation>
    <scope>NUCLEOTIDE SEQUENCE [LARGE SCALE GENOMIC DNA]</scope>
</reference>
<reference key="7">
    <citation type="journal article" date="2004" name="Genome Res.">
        <title>The status, quality, and expansion of the NIH full-length cDNA project: the Mammalian Gene Collection (MGC).</title>
        <authorList>
            <consortium name="The MGC Project Team"/>
        </authorList>
    </citation>
    <scope>NUCLEOTIDE SEQUENCE [LARGE SCALE MRNA]</scope>
</reference>
<reference key="8">
    <citation type="journal article" date="1991" name="Biochemistry">
        <title>Location of the disulfide bonds in human coagulation factor XI: the presence of tandem apple domains.</title>
        <authorList>
            <person name="McMullen B.A."/>
            <person name="Fujikawa K."/>
            <person name="Davie E.W."/>
        </authorList>
    </citation>
    <scope>PARTIAL PROTEIN SEQUENCE</scope>
    <scope>DISULFIDE BONDS</scope>
</reference>
<reference key="9">
    <citation type="journal article" date="1988" name="Biochemistry">
        <title>Inactivation of human plasma kallikrein and factor XIa by protein C inhibitor.</title>
        <authorList>
            <person name="Meijers J.C."/>
            <person name="Kanters D.H."/>
            <person name="Vlooswijk R.A."/>
            <person name="van Erp H.E."/>
            <person name="Hessing M."/>
            <person name="Bouma B.N."/>
        </authorList>
    </citation>
    <scope>ACTIVITY REGULATION</scope>
    <scope>HETERODIMER WITH SERPINA5</scope>
</reference>
<reference key="10">
    <citation type="journal article" date="1991" name="J. Biol. Chem.">
        <title>Activation of human blood coagulation factor XI independent of factor XII. Factor XI is activated by thrombin and factor XIa in the presence of negatively charged surfaces.</title>
        <authorList>
            <person name="Naito K."/>
            <person name="Fujikawa K."/>
        </authorList>
    </citation>
    <scope>ACTIVATION</scope>
</reference>
<reference key="11">
    <citation type="journal article" date="1993" name="Blood">
        <title>Activation of factor XI in plasma is dependent on factor XII.</title>
        <authorList>
            <person name="Brunnee T."/>
            <person name="La Porta C."/>
            <person name="Reddigari S.R."/>
            <person name="Salerno V.M."/>
            <person name="Kaplan A.P."/>
            <person name="Silverberg M."/>
        </authorList>
    </citation>
    <scope>ACTIVATION</scope>
</reference>
<reference key="12">
    <citation type="journal article" date="2001" name="Biochemistry">
        <title>Localization of a heparin binding site in the catalytic domain of factor XIa.</title>
        <authorList>
            <person name="Badellino K.O."/>
            <person name="Walsh P.N."/>
        </authorList>
    </citation>
    <scope>HEPARIN-BINDING SITE</scope>
</reference>
<reference key="13">
    <citation type="journal article" date="2005" name="J. Proteome Res.">
        <title>Human plasma N-glycoproteome analysis by immunoaffinity subtraction, hydrazide chemistry, and mass spectrometry.</title>
        <authorList>
            <person name="Liu T."/>
            <person name="Qian W.-J."/>
            <person name="Gritsenko M.A."/>
            <person name="Camp D.G. II"/>
            <person name="Monroe M.E."/>
            <person name="Moore R.J."/>
            <person name="Smith R.D."/>
        </authorList>
    </citation>
    <scope>GLYCOSYLATION [LARGE SCALE ANALYSIS] AT ASN-126; ASN-450 AND ASN-491</scope>
    <source>
        <tissue>Plasma</tissue>
    </source>
</reference>
<reference key="14">
    <citation type="journal article" date="2009" name="J. Proteome Res.">
        <title>Glycoproteomics analysis of human liver tissue by combination of multiple enzyme digestion and hydrazide chemistry.</title>
        <authorList>
            <person name="Chen R."/>
            <person name="Jiang X."/>
            <person name="Sun D."/>
            <person name="Han G."/>
            <person name="Wang F."/>
            <person name="Ye M."/>
            <person name="Wang L."/>
            <person name="Zou H."/>
        </authorList>
    </citation>
    <scope>GLYCOSYLATION [LARGE SCALE ANALYSIS] AT ASN-450 AND ASN-491</scope>
    <source>
        <tissue>Liver</tissue>
    </source>
</reference>
<reference key="15">
    <citation type="journal article" date="2009" name="J. Thromb. Haemost.">
        <title>Three residues at the interface of factor XI (FXI) monomers augment covalent dimerization of FXI.</title>
        <authorList>
            <person name="Zucker M."/>
            <person name="Zivelin A."/>
            <person name="Landau M."/>
            <person name="Rosenberg N."/>
            <person name="Seligsohn U."/>
        </authorList>
    </citation>
    <scope>SUBUNIT</scope>
    <scope>MUTAGENESIS OF LEU-302; ILE-308; GLY-344 AND TYR-347</scope>
</reference>
<reference key="16">
    <citation type="journal article" date="2011" name="Blood">
        <title>Polyphosphate is a cofactor for the activation of factor XI by thrombin.</title>
        <authorList>
            <person name="Choi S.H."/>
            <person name="Smith S.A."/>
            <person name="Morrissey J.H."/>
        </authorList>
    </citation>
    <scope>ACTIVATION</scope>
</reference>
<reference key="17">
    <citation type="journal article" date="2012" name="J. Biol. Chem.">
        <title>A sequential mechanism for exosite-mediated factor IX activation by factor XIa.</title>
        <authorList>
            <person name="Geng Y."/>
            <person name="Verhamme I.M."/>
            <person name="Messer A."/>
            <person name="Sun M.F."/>
            <person name="Smith S.B."/>
            <person name="Bajaj S.P."/>
            <person name="Gailani D."/>
        </authorList>
    </citation>
    <scope>FUNCTION</scope>
    <scope>CATALYTIC ACTIVITY</scope>
    <scope>BIOPHYSICOCHEMICAL PROPERTIES</scope>
    <scope>SUBUNIT</scope>
    <scope>INTERACTION WITH F9</scope>
</reference>
<reference key="18">
    <citation type="journal article" date="2014" name="Proteomics">
        <title>Site-specific N-glycosylation analysis of human factor XI: Identification of a noncanonical NXC glycosite.</title>
        <authorList>
            <person name="Faid V."/>
            <person name="Denguir N."/>
            <person name="Chapuis V."/>
            <person name="Bihoreau N."/>
            <person name="Chevreux G."/>
        </authorList>
    </citation>
    <scope>GLYCOSYLATION AT ASN-90; ASN-126; ASN-163; ASN-450 AND ASN-491</scope>
    <scope>PARTIAL PROTEIN SEQUENCE</scope>
    <scope>IDENTIFICATION BY MASS SPECTROMETRY</scope>
    <scope>STRUCTURE OF CARBOHYDRATES</scope>
</reference>
<reference key="19">
    <citation type="journal article" date="2022" name="J. Biol. Chem.">
        <title>Novel salivary antihemostatic activities of long-form D7 proteins from the malaria vector Anopheles gambiae facilitate hematophagy.</title>
        <authorList>
            <person name="Smith L.B."/>
            <person name="Duge E."/>
            <person name="Valenzuela-Leon P.C."/>
            <person name="Brooks S."/>
            <person name="Martin-Martin I."/>
            <person name="Ackerman H."/>
            <person name="Calvo E."/>
        </authorList>
    </citation>
    <scope>INTERACTION WITH MOSQUITO D7L2</scope>
</reference>
<reference evidence="41" key="20">
    <citation type="journal article" date="2023" name="Front. Immunol.">
        <title>Guianensin, a Simulium guianense salivary protein, has broad anti-hemostatic and anti-inflammatory properties.</title>
        <authorList>
            <person name="Valenzuela-Leon P.C."/>
            <person name="Campos Chagas A."/>
            <person name="Martin-Martin I."/>
            <person name="Williams A.E."/>
            <person name="Berger M."/>
            <person name="Shrivastava G."/>
            <person name="Paige A.S."/>
            <person name="Kotsyfakis M."/>
            <person name="Tirloni L."/>
            <person name="Calvo E."/>
        </authorList>
    </citation>
    <scope>INTERACTION WITH BLACK FLY GUIANENSIN</scope>
</reference>
<reference key="21">
    <citation type="journal article" date="2008" name="J. Med. Chem.">
        <title>Clavatadine A, a natural product with selective recognition and irreversible inhibition of factor XIa.</title>
        <authorList>
            <person name="Buchanan M.S."/>
            <person name="Carroll A.R."/>
            <person name="Wessling D."/>
            <person name="Jobling M."/>
            <person name="Avery V.M."/>
            <person name="Davis R.A."/>
            <person name="Feng Y."/>
            <person name="Xue Y."/>
            <person name="Oster L."/>
            <person name="Fex T."/>
            <person name="Deinum J."/>
            <person name="Hooper J.N."/>
            <person name="Quinn R.J."/>
        </authorList>
    </citation>
    <scope>X-RAY CRYSTALLOGRAPHY (1.6 ANGSTROMS) OF 388-625 IN COMPLEX WITH INHIBITOR</scope>
    <scope>DISULFIDE BONDS</scope>
</reference>
<reference key="22">
    <citation type="journal article" date="1989" name="Proc. Natl. Acad. Sci. U.S.A.">
        <title>Factor XI (plasma thromboplastin antecedent) deficiency in Ashkenazi Jews is a bleeding disorder that can result from three types of point mutations.</title>
        <authorList>
            <person name="Asakai R."/>
            <person name="Chung D.W."/>
            <person name="Ratnoff O.D."/>
            <person name="Davie E.W."/>
        </authorList>
    </citation>
    <scope>VARIANT FA11D LEU-301</scope>
</reference>
<reference key="23">
    <citation type="journal article" date="1992" name="Blood">
        <title>Expression of human blood coagulation factor XI: characterization of the defect in factor XI type III deficiency.</title>
        <authorList>
            <person name="Meijers J.C."/>
            <person name="Davie E.W."/>
            <person name="Chung D.W."/>
        </authorList>
    </citation>
    <scope>VARIANT FA11D LEU-301</scope>
</reference>
<reference key="24">
    <citation type="journal article" date="1995" name="Blood">
        <title>Six point mutations that cause factor XI deficiency.</title>
        <authorList>
            <person name="Pugh R.E."/>
            <person name="McVey J.H."/>
            <person name="Tuddenham E.G."/>
            <person name="Hancock J.F."/>
        </authorList>
    </citation>
    <scope>VARIANTS FA11D HIS-34; PRO-320; ILE-322 AND LYS-341</scope>
</reference>
<reference key="25">
    <citation type="journal article" date="1995" name="Br. J. Haematol.">
        <title>Identification of two novel mutations in non-Jewish factor XI deficiency.</title>
        <authorList>
            <person name="Imanaka Y."/>
            <person name="Lal K."/>
            <person name="Nishimura T."/>
            <person name="Bolton-Maggs P.H."/>
            <person name="Tuddenham E.G."/>
            <person name="McVey J.H."/>
        </authorList>
    </citation>
    <scope>VARIANT FA11D VAL-460</scope>
</reference>
<reference key="26">
    <citation type="journal article" date="1997" name="Br. J. Haematol.">
        <title>Severe factor XI deficiency in an Arab family associated with a novel mutation in exon 11.</title>
        <authorList>
            <person name="Wistinghausen B."/>
            <person name="Reischer A."/>
            <person name="Oddoux C."/>
            <person name="Ostrer H."/>
            <person name="Nardi M."/>
            <person name="Karpatkin M."/>
        </authorList>
    </citation>
    <scope>VARIANT FA11D ASN-404</scope>
</reference>
<reference key="27">
    <citation type="journal article" date="1998" name="Blood">
        <title>Identification of mutations and polymorphisms in the factor XI genes of an African American family by dideoxyfingerprinting.</title>
        <authorList>
            <person name="Martincic D."/>
            <person name="Zimmerman S.A."/>
            <person name="Ware R.E."/>
            <person name="Sun M.-F."/>
            <person name="Whitlock J.A."/>
            <person name="Gailani D."/>
        </authorList>
    </citation>
    <scope>VARIANT FA11D ASN-266</scope>
    <scope>VARIANT ARG-244</scope>
</reference>
<reference key="28">
    <citation type="journal article" date="1999" name="Blood">
        <authorList>
            <person name="Martincic D."/>
            <person name="Zimmerman S.A."/>
            <person name="Ware R.E."/>
            <person name="Sun M.-F."/>
            <person name="Whitlock J.A."/>
            <person name="Gailani D."/>
        </authorList>
    </citation>
    <scope>ERRATUM OF PUBMED:9787168</scope>
</reference>
<reference key="29">
    <citation type="journal article" date="1999" name="Br. J. Haematol.">
        <title>Identification of a novel mutation in a non-Jewish factor XI deficient kindred.</title>
        <authorList>
            <person name="Alhaq A."/>
            <person name="Mitchell M."/>
            <person name="Sethi M."/>
            <person name="Rahman S."/>
            <person name="Flynn G."/>
            <person name="Boulton P."/>
            <person name="Caeno G."/>
            <person name="Smith M."/>
            <person name="Savidge G."/>
        </authorList>
    </citation>
    <scope>VARIANT FA11D CYS-246</scope>
</reference>
<reference key="30">
    <citation type="journal article" date="1999" name="Br. J. Haematol.">
        <title>Heterozygous factor XI deficiency associated with three novel mutations.</title>
        <authorList>
            <person name="Mitchell M."/>
            <person name="Cutler J."/>
            <person name="Thompson S."/>
            <person name="Moore G."/>
            <person name="Jenkins Ap Rees E."/>
            <person name="Smith M."/>
            <person name="Savidge G."/>
            <person name="Alhaq A."/>
        </authorList>
    </citation>
    <scope>VARIANTS FA11D CYS-326; VAL-430; ILE-493 AND ARG-594</scope>
</reference>
<reference key="31">
    <citation type="journal article" date="1999" name="Nat. Genet.">
        <title>Characterization of single-nucleotide polymorphisms in coding regions of human genes.</title>
        <authorList>
            <person name="Cargill M."/>
            <person name="Altshuler D."/>
            <person name="Ireland J."/>
            <person name="Sklar P."/>
            <person name="Ardlie K."/>
            <person name="Patil N."/>
            <person name="Shaw N."/>
            <person name="Lane C.R."/>
            <person name="Lim E.P."/>
            <person name="Kalyanaraman N."/>
            <person name="Nemesh J."/>
            <person name="Ziaugra L."/>
            <person name="Friedland L."/>
            <person name="Rolfe A."/>
            <person name="Warrington J."/>
            <person name="Lipshutz R."/>
            <person name="Daley G.Q."/>
            <person name="Lander E.S."/>
        </authorList>
    </citation>
    <scope>VARIANTS LEU-66; ARG-244; PHE-308 AND PHE-339</scope>
</reference>
<reference key="32">
    <citation type="journal article" date="1999" name="Nat. Genet.">
        <authorList>
            <person name="Cargill M."/>
            <person name="Altshuler D."/>
            <person name="Ireland J."/>
            <person name="Sklar P."/>
            <person name="Ardlie K."/>
            <person name="Patil N."/>
            <person name="Shaw N."/>
            <person name="Lane C.R."/>
            <person name="Lim E.P."/>
            <person name="Kalyanaraman N."/>
            <person name="Nemesh J."/>
            <person name="Ziaugra L."/>
            <person name="Friedland L."/>
            <person name="Rolfe A."/>
            <person name="Warrington J."/>
            <person name="Lipshutz R."/>
            <person name="Daley G.Q."/>
            <person name="Lander E.S."/>
        </authorList>
    </citation>
    <scope>ERRATUM OF PUBMED:10391209</scope>
</reference>
<reference key="33">
    <citation type="journal article" date="2002" name="Blood">
        <title>Factor XI deficiency in French Basques is caused predominantly by an ancestral Cys38Arg mutation in the factor XI gene.</title>
        <authorList>
            <person name="Zivelin A."/>
            <person name="Bauduer F."/>
            <person name="Ducout L."/>
            <person name="Peretz H."/>
            <person name="Rosenberg N."/>
            <person name="Yatuv R."/>
            <person name="Seligsohn U."/>
        </authorList>
    </citation>
    <scope>VARIANTS FA11D ARG-56; TYR-255 AND HIS-511</scope>
    <scope>VARIANT PHE-339</scope>
    <scope>CHARACTERIZATION OF VARIANTS FA11D ARG-56; TYR-255 AND HIS-511</scope>
</reference>
<reference key="34">
    <citation type="journal article" date="2004" name="Blood">
        <title>Dominant factor XI deficiency caused by mutations in the factor XI catalytic domain.</title>
        <authorList>
            <person name="Kravtsov D.V."/>
            <person name="Wu W."/>
            <person name="Meijers J.C.M."/>
            <person name="Sun M.-F."/>
            <person name="Blinder M.A."/>
            <person name="Dang T.P."/>
            <person name="Wang H."/>
            <person name="Gailani D."/>
        </authorList>
    </citation>
    <scope>VARIANTS FA11D VAL-418 AND SER-587</scope>
    <scope>CHARACTERIZATION OF VARIANTS FA11D VAL-418 AND SER-587</scope>
</reference>
<reference key="35">
    <citation type="journal article" date="2004" name="Br. J. Haematol.">
        <title>Severe factor XI deficiency caused by compound heterozygosity.</title>
        <authorList>
            <person name="Dai L."/>
            <person name="Mitchell M."/>
            <person name="Carson P."/>
            <person name="Creagh D."/>
            <person name="Cutler J."/>
            <person name="Savidge G."/>
            <person name="Alhaq A."/>
        </authorList>
    </citation>
    <scope>VARIANT FA11D ILE-270</scope>
    <scope>CHARACTERIZATION OF VARIANT F11 DEFICIENCY ILE-270</scope>
</reference>
<reference key="36">
    <citation type="journal article" date="2005" name="Br. J. Haematol.">
        <title>Genetic analysis in FXI deficiency: six novel mutations and the use of a polymerase chain reaction-based test to define a whole gene deletion.</title>
        <authorList>
            <person name="Hill M."/>
            <person name="McLeod F."/>
            <person name="Franks H."/>
            <person name="Gordon B."/>
            <person name="Dolan G."/>
        </authorList>
    </citation>
    <scope>VARIANTS FA11D PHE-46; ARG-101; CYS-151; GLU-263; VAL-430; LEU-538; LYS-565 AND SER-618</scope>
</reference>
<reference key="37">
    <citation type="journal article" date="2006" name="Blood Coagul. Fibrinolysis">
        <title>Identification of five novel mutations in the factor XI gene (F11) of patients with factor XI deficiency.</title>
        <authorList>
            <person name="Quelin F."/>
            <person name="Mathonnet F."/>
            <person name="Potentini-Esnault C."/>
            <person name="Trigui N."/>
            <person name="Peynet J."/>
            <person name="Bastenaire B."/>
            <person name="Guillon L."/>
            <person name="Bigel M.L."/>
            <person name="Sauger A."/>
            <person name="Mazurier C."/>
            <person name="de Mazancourt P."/>
        </authorList>
    </citation>
    <scope>VARIANTS FA11D TYR-140; LYS-315 AND LYS-597</scope>
</reference>
<reference key="38">
    <citation type="journal article" date="2008" name="Haemophilia">
        <title>Seven novel point mutations in the F11 gene in Iranian FXI-deficient patients.</title>
        <authorList>
            <person name="Fard-Esfahani P."/>
            <person name="Lari G.R."/>
            <person name="Ravanbod S."/>
            <person name="Mirkhani F."/>
            <person name="Allahyari M."/>
            <person name="Rassoulzadegan M."/>
            <person name="Ala F."/>
        </authorList>
    </citation>
    <scope>VARIANTS FA11D ILE-51; PRO-51; ILE-331; PRO-360; PRO-503 AND HIS-608</scope>
</reference>
<reference key="39">
    <citation type="journal article" date="2012" name="Clin. Genet.">
        <title>Population-specific spectrum of the F11 mutations in Koreans: evidence for a founder effect.</title>
        <authorList>
            <person name="Kim J."/>
            <person name="Song J."/>
            <person name="Lyu C."/>
            <person name="Kim Y."/>
            <person name="Oh S."/>
            <person name="Choi Y."/>
            <person name="Yoo J."/>
            <person name="Choi J."/>
            <person name="Kim H."/>
            <person name="Lee K.A."/>
        </authorList>
    </citation>
    <scope>VARIANTS FA11D ARG-32; GLN-53; THR-252; ARG-401 AND GLU-526</scope>
</reference>
<reference key="40">
    <citation type="journal article" date="2011" name="Haemophilia">
        <title>Three dominant-negative mutations in factor XI-deficient patients.</title>
        <authorList>
            <person name="Dai L."/>
            <person name="Rangarajan S."/>
            <person name="Mitchell M."/>
        </authorList>
    </citation>
    <scope>VARIANTS FA11D THR-43; LEU-241 AND MET-403</scope>
    <scope>CHARACTERIZATION OF VARIANTS FA11D THR-43; LEU-241 AND MET-403</scope>
</reference>
<reference key="41">
    <citation type="journal article" date="2011" name="Korean J. Lab. Med.">
        <title>A novel missense mutation Asp506Gly in exon 13 of the F11 gene in an asymptomatic Korean woman with mild factor XI deficiency.</title>
        <authorList>
            <person name="Lee J.H."/>
            <person name="Cho H.S."/>
            <person name="Hyun M.S."/>
            <person name="Kim H.Y."/>
            <person name="Kim H.J."/>
        </authorList>
    </citation>
    <scope>VARIANT FA11D GLY-506</scope>
</reference>
<reference key="42">
    <citation type="journal article" date="2012" name="Blood Coagul. Fibrinolysis">
        <title>Identification of a novel F11 missense mutation (Ile463Ser) in a family with congenital factor XI deficiency.</title>
        <authorList>
            <person name="Tirefort Y."/>
            <person name="Uhr M.R."/>
            <person name="Neerman-Arbez M."/>
            <person name="de Moerloose P."/>
        </authorList>
    </citation>
    <scope>VARIANT FA11D SER-481</scope>
</reference>
<reference key="43">
    <citation type="journal article" date="2012" name="Eur. J. Haematol.">
        <title>A cluster of factor XI-deficient patients due to a new mutation (Ile 436 Lys) in northeastern Italy.</title>
        <authorList>
            <person name="Girolami A."/>
            <person name="Scarparo P."/>
            <person name="Bonamigo E."/>
            <person name="Santarossa L."/>
            <person name="Cristiani A."/>
            <person name="Moro S."/>
            <person name="Lombardi A.M."/>
        </authorList>
    </citation>
    <scope>VARIANT FA11D LYS-454</scope>
</reference>
<reference key="44">
    <citation type="journal article" date="2012" name="Thromb. Haemost.">
        <title>Revisiting the molecular epidemiology of factor XI deficiency: nine new mutations and an original large 4qTer deletion in western Brittany (France).</title>
        <authorList>
            <person name="Gueguen P."/>
            <person name="Chauvin A."/>
            <person name="Quemener-Redon S."/>
            <person name="Pan-Petesch B."/>
            <person name="Ferec C."/>
            <person name="Abgrall J.F."/>
            <person name="Le Marechal C."/>
        </authorList>
    </citation>
    <scope>VARIANTS FA11D PRO-51; ARG-56; VAL-63; TYR-222; GLN-228; CYS-276; ASP-277; PHE-514; LEU-575 AND LYS-597</scope>
</reference>
<reference key="45">
    <citation type="journal article" date="2015" name="Blood Coagul. Fibrinolysis">
        <title>Molecular basis and bleeding manifestations of factor XI deficiency in 11 Turkish families.</title>
        <authorList>
            <person name="Keskin E.Y."/>
            <person name="Guersel T."/>
            <person name="Kaya Z."/>
            <person name="Dai L."/>
            <person name="Kocak U."/>
            <person name="Yenicesu I."/>
            <person name="Belen F.B."/>
            <person name="Mitchell M."/>
        </authorList>
    </citation>
    <scope>VARIANTS FA11D SER-30; THR-109; ASN-216; LYS-315; LYS-543 AND ARG-552</scope>
</reference>
<feature type="signal peptide">
    <location>
        <begin position="1"/>
        <end position="18"/>
    </location>
</feature>
<feature type="chain" id="PRO_0000027825" description="Coagulation factor XIa heavy chain">
    <location>
        <begin position="19"/>
        <end position="387"/>
    </location>
</feature>
<feature type="chain" id="PRO_0000027826" description="Coagulation factor XIa light chain">
    <location>
        <begin position="388"/>
        <end position="625"/>
    </location>
</feature>
<feature type="domain" description="Apple 1" evidence="3">
    <location>
        <begin position="20"/>
        <end position="103"/>
    </location>
</feature>
<feature type="domain" description="Apple 2" evidence="3">
    <location>
        <begin position="110"/>
        <end position="193"/>
    </location>
</feature>
<feature type="domain" description="Apple 3" evidence="3">
    <location>
        <begin position="200"/>
        <end position="283"/>
    </location>
</feature>
<feature type="domain" description="Apple 4" evidence="3">
    <location>
        <begin position="291"/>
        <end position="374"/>
    </location>
</feature>
<feature type="domain" description="Peptidase S1" evidence="2">
    <location>
        <begin position="388"/>
        <end position="623"/>
    </location>
</feature>
<feature type="active site" description="Charge relay system">
    <location>
        <position position="431"/>
    </location>
</feature>
<feature type="active site" description="Charge relay system">
    <location>
        <position position="480"/>
    </location>
</feature>
<feature type="active site" description="Charge relay system">
    <location>
        <position position="575"/>
    </location>
</feature>
<feature type="binding site">
    <location>
        <begin position="547"/>
        <end position="550"/>
    </location>
    <ligand>
        <name>heparin</name>
        <dbReference type="ChEBI" id="CHEBI:28304"/>
    </ligand>
</feature>
<feature type="glycosylation site" description="N-linked (GlcNAc...) (complex) asparagine" evidence="28">
    <location>
        <position position="90"/>
    </location>
</feature>
<feature type="glycosylation site" description="N-linked (GlcNAc...) (complex) asparagine" evidence="12 28">
    <location>
        <position position="126"/>
    </location>
</feature>
<feature type="glycosylation site" description="N-linked (GlcNAc...) (complex) asparagine; atypical" evidence="28">
    <location>
        <position position="163"/>
    </location>
</feature>
<feature type="glycosylation site" description="N-linked (GlcNAc...) (complex) asparagine" evidence="12 16 28">
    <location>
        <position position="450"/>
    </location>
</feature>
<feature type="glycosylation site" description="N-linked (GlcNAc...) (complex) asparagine" evidence="12 16 18 28">
    <location>
        <position position="491"/>
    </location>
</feature>
<feature type="disulfide bond" evidence="1">
    <location>
        <begin position="20"/>
        <end position="103"/>
    </location>
</feature>
<feature type="disulfide bond" description="Interchain">
    <location>
        <position position="29"/>
    </location>
</feature>
<feature type="disulfide bond" evidence="18">
    <location>
        <begin position="46"/>
        <end position="76"/>
    </location>
</feature>
<feature type="disulfide bond" evidence="18">
    <location>
        <begin position="50"/>
        <end position="56"/>
    </location>
</feature>
<feature type="disulfide bond" evidence="18">
    <location>
        <begin position="110"/>
        <end position="193"/>
    </location>
</feature>
<feature type="disulfide bond" evidence="18">
    <location>
        <begin position="136"/>
        <end position="165"/>
    </location>
</feature>
<feature type="disulfide bond" evidence="18">
    <location>
        <begin position="140"/>
        <end position="146"/>
    </location>
</feature>
<feature type="disulfide bond">
    <location>
        <begin position="200"/>
        <end position="283"/>
    </location>
</feature>
<feature type="disulfide bond" evidence="18">
    <location>
        <begin position="226"/>
        <end position="255"/>
    </location>
</feature>
<feature type="disulfide bond" evidence="18">
    <location>
        <begin position="230"/>
        <end position="236"/>
    </location>
</feature>
<feature type="disulfide bond" evidence="18">
    <location>
        <begin position="291"/>
        <end position="374"/>
    </location>
</feature>
<feature type="disulfide bond" evidence="18">
    <location>
        <begin position="317"/>
        <end position="346"/>
    </location>
</feature>
<feature type="disulfide bond" evidence="18">
    <location>
        <begin position="321"/>
        <end position="327"/>
    </location>
</feature>
<feature type="disulfide bond" description="Interchain" evidence="1">
    <location>
        <position position="339"/>
    </location>
</feature>
<feature type="disulfide bond" description="Interchain (between heavy and light chains)">
    <location>
        <begin position="380"/>
        <end position="500"/>
    </location>
</feature>
<feature type="disulfide bond" evidence="18">
    <location>
        <begin position="416"/>
        <end position="432"/>
    </location>
</feature>
<feature type="disulfide bond">
    <location>
        <begin position="514"/>
        <end position="581"/>
    </location>
</feature>
<feature type="disulfide bond" evidence="18">
    <location>
        <begin position="545"/>
        <end position="560"/>
    </location>
</feature>
<feature type="disulfide bond">
    <location>
        <begin position="571"/>
        <end position="599"/>
    </location>
</feature>
<feature type="splice variant" id="VSP_005388" description="In isoform 2." evidence="40">
    <location>
        <begin position="109"/>
        <end position="162"/>
    </location>
</feature>
<feature type="sequence variant" id="VAR_076515" description="In FA11D." evidence="29">
    <original>F</original>
    <variation>S</variation>
    <location>
        <position position="30"/>
    </location>
</feature>
<feature type="sequence variant" id="VAR_067929" description="In FA11D; dbSNP:rs281875259." evidence="21">
    <original>G</original>
    <variation>R</variation>
    <location>
        <position position="32"/>
    </location>
</feature>
<feature type="sequence variant" id="VAR_012085" description="In FA11D; dbSNP:rs281875267." evidence="35">
    <original>D</original>
    <variation>H</variation>
    <location>
        <position position="34"/>
    </location>
</feature>
<feature type="sequence variant" id="VAR_067930" description="In FA11D; dominant-negative mutation that results in severely decreased protein secretion; dbSNP:rs281875264." evidence="20">
    <original>A</original>
    <variation>T</variation>
    <location>
        <position position="43"/>
    </location>
</feature>
<feature type="sequence variant" id="VAR_054894" description="In FA11D; dbSNP:rs281875271." evidence="11">
    <original>C</original>
    <variation>F</variation>
    <location>
        <position position="46"/>
    </location>
</feature>
<feature type="sequence variant" id="VAR_067931" description="In FA11D; dbSNP:rs281875252." evidence="14">
    <original>T</original>
    <variation>I</variation>
    <location>
        <position position="51"/>
    </location>
</feature>
<feature type="sequence variant" id="VAR_067932" description="In FA11D; dbSNP:rs281875243." evidence="14 25">
    <original>T</original>
    <variation>P</variation>
    <location>
        <position position="51"/>
    </location>
</feature>
<feature type="sequence variant" id="VAR_067933" description="In FA11D; dbSNP:rs281875261." evidence="21">
    <original>H</original>
    <variation>Q</variation>
    <location>
        <position position="53"/>
    </location>
</feature>
<feature type="sequence variant" id="VAR_054895" description="In FA11D; secretion of the mutant protein is impaired; dbSNP:rs121965069." evidence="7 25">
    <original>C</original>
    <variation>R</variation>
    <location>
        <position position="56"/>
    </location>
</feature>
<feature type="sequence variant" id="VAR_067934" description="In FA11D; dbSNP:rs281875244." evidence="25">
    <original>A</original>
    <variation>V</variation>
    <location>
        <position position="63"/>
    </location>
</feature>
<feature type="sequence variant" id="VAR_011774" description="In dbSNP:rs5968." evidence="5">
    <original>P</original>
    <variation>L</variation>
    <location>
        <position position="66"/>
    </location>
</feature>
<feature type="sequence variant" id="VAR_054896" description="In FA11D; dbSNP:rs281875272." evidence="11">
    <original>K</original>
    <variation>R</variation>
    <location>
        <position position="101"/>
    </location>
</feature>
<feature type="sequence variant" id="VAR_076516" description="In FA11D; dbSNP:rs768474112." evidence="29">
    <original>A</original>
    <variation>T</variation>
    <location>
        <position position="109"/>
    </location>
</feature>
<feature type="sequence variant" id="VAR_067935" description="In FA11D; dbSNP:rs281875256." evidence="13">
    <original>C</original>
    <variation>Y</variation>
    <location>
        <position position="140"/>
    </location>
</feature>
<feature type="sequence variant" id="VAR_054897" description="In FA11D; dbSNP:rs281875273." evidence="11">
    <original>Y</original>
    <variation>C</variation>
    <location>
        <position position="151"/>
    </location>
</feature>
<feature type="sequence variant" id="VAR_076517" description="In FA11D." evidence="29">
    <original>D</original>
    <variation>N</variation>
    <location>
        <position position="216"/>
    </location>
</feature>
<feature type="sequence variant" id="VAR_067936" description="In FA11D; dbSNP:rs281875245." evidence="25">
    <original>D</original>
    <variation>Y</variation>
    <location>
        <position position="222"/>
    </location>
</feature>
<feature type="sequence variant" id="VAR_067937" description="In FA11D; dbSNP:rs281875246." evidence="25">
    <original>R</original>
    <variation>Q</variation>
    <location>
        <position position="228"/>
    </location>
</feature>
<feature type="sequence variant" id="VAR_067938" description="In FA11D; dominant-negative mutation that results in severely decreased protein secretion; dbSNP:rs281875265." evidence="20">
    <original>F</original>
    <variation>L</variation>
    <location>
        <position position="241"/>
    </location>
</feature>
<feature type="sequence variant" id="VAR_011775" description="Found in a patient with factor XI deficiency that also carries mutation N-266; dbSNP:rs5969." evidence="5 38">
    <original>Q</original>
    <variation>R</variation>
    <location>
        <position position="244"/>
    </location>
</feature>
<feature type="sequence variant" id="VAR_012086" description="In FA11D; dbSNP:rs281875279." evidence="4">
    <original>W</original>
    <variation>C</variation>
    <location>
        <position position="246"/>
    </location>
</feature>
<feature type="sequence variant" id="VAR_067939" description="In FA11D; dbSNP:rs281875260." evidence="21">
    <original>R</original>
    <variation>T</variation>
    <location>
        <position position="252"/>
    </location>
</feature>
<feature type="sequence variant" id="VAR_054898" description="In FA11D; secretion of the mutant protein is impaired; dbSNP:rs281875277." evidence="7">
    <original>C</original>
    <variation>Y</variation>
    <location>
        <position position="255"/>
    </location>
</feature>
<feature type="sequence variant" id="VAR_054899" description="In FA11D; dbSNP:rs281875274." evidence="11">
    <original>G</original>
    <variation>E</variation>
    <location>
        <position position="263"/>
    </location>
</feature>
<feature type="sequence variant" id="VAR_012087" description="In FA11D; dbSNP:rs145168351." evidence="38">
    <original>S</original>
    <variation>N</variation>
    <location>
        <position position="266"/>
    </location>
</feature>
<feature type="sequence variant" id="VAR_054900" description="In FA11D; although the mutant protein is synthesized the secretion is reduced; dbSNP:rs121965070." evidence="9">
    <original>K</original>
    <variation>I</variation>
    <location>
        <position position="270"/>
    </location>
</feature>
<feature type="sequence variant" id="VAR_067940" description="In FA11D; dbSNP:rs281875247." evidence="25">
    <original>S</original>
    <variation>C</variation>
    <location>
        <position position="276"/>
    </location>
</feature>
<feature type="sequence variant" id="VAR_067941" description="In FA11D; dbSNP:rs281875248." evidence="25">
    <original>G</original>
    <variation>D</variation>
    <location>
        <position position="277"/>
    </location>
</feature>
<feature type="sequence variant" id="VAR_006622" description="In FA11D; dbSNP:rs121965064." evidence="10 30">
    <original>F</original>
    <variation>L</variation>
    <location>
        <position position="301"/>
    </location>
</feature>
<feature type="sequence variant" id="VAR_011776" description="In dbSNP:rs5972." evidence="5">
    <original>I</original>
    <variation>F</variation>
    <location>
        <position position="308"/>
    </location>
</feature>
<feature type="sequence variant" id="VAR_067942" description="In FA11D; dbSNP:rs281875257." evidence="13 29">
    <original>E</original>
    <variation>K</variation>
    <location>
        <position position="315"/>
    </location>
</feature>
<feature type="sequence variant" id="VAR_012088" description="In FA11D; dbSNP:rs281875268." evidence="35">
    <original>L</original>
    <variation>P</variation>
    <location>
        <position position="320"/>
    </location>
</feature>
<feature type="sequence variant" id="VAR_012089" description="In FA11D; dbSNP:rs281875269." evidence="35">
    <original>T</original>
    <variation>I</variation>
    <location>
        <position position="322"/>
    </location>
</feature>
<feature type="sequence variant" id="VAR_012090" description="In FA11D; dbSNP:rs28934608." evidence="6">
    <original>R</original>
    <variation>C</variation>
    <location>
        <position position="326"/>
    </location>
</feature>
<feature type="sequence variant" id="VAR_067943" description="In FA11D; dbSNP:rs281875253." evidence="14">
    <original>T</original>
    <variation>I</variation>
    <location>
        <position position="331"/>
    </location>
</feature>
<feature type="sequence variant" id="VAR_011777" description="In dbSNP:rs5967." evidence="5 7 39">
    <original>C</original>
    <variation>F</variation>
    <location>
        <position position="339"/>
    </location>
</feature>
<feature type="sequence variant" id="VAR_012091" description="In FA11D; dbSNP:rs281875270." evidence="35">
    <original>E</original>
    <variation>K</variation>
    <location>
        <position position="341"/>
    </location>
</feature>
<feature type="sequence variant" id="VAR_067944" description="In FA11D; dbSNP:rs281875254." evidence="14">
    <original>L</original>
    <variation>P</variation>
    <location>
        <position position="360"/>
    </location>
</feature>
<feature type="sequence variant" id="VAR_011778" description="In dbSNP:rs1800439.">
    <original>W</original>
    <variation>R</variation>
    <location>
        <position position="399"/>
    </location>
</feature>
<feature type="sequence variant" id="VAR_067945" description="In FA11D; dbSNP:rs281875262." evidence="21">
    <original>W</original>
    <variation>R</variation>
    <location>
        <position position="401"/>
    </location>
</feature>
<feature type="sequence variant" id="VAR_067946" description="In FA11D; dominant-negative mutation that results in severely decreased protein secretion; dbSNP:rs281875266." evidence="20">
    <original>V</original>
    <variation>M</variation>
    <location>
        <position position="403"/>
    </location>
</feature>
<feature type="sequence variant" id="VAR_012092" description="In FA11D; dbSNP:rs121965067." evidence="37">
    <original>T</original>
    <variation>N</variation>
    <location>
        <position position="404"/>
    </location>
</feature>
<feature type="sequence variant" id="VAR_054901" description="In FA11D; mutant is not secreted by transfected fibroblasts; dominant-negative effect; dbSNP:rs121965071." evidence="8">
    <original>G</original>
    <variation>V</variation>
    <location>
        <position position="418"/>
    </location>
</feature>
<feature type="sequence variant" id="VAR_012093" description="In FA11D; dbSNP:rs121965068." evidence="6 11">
    <original>A</original>
    <variation>V</variation>
    <location>
        <position position="430"/>
    </location>
</feature>
<feature type="sequence variant" id="VAR_067947" description="In FA11D; dbSNP:rs281875241." evidence="23">
    <original>I</original>
    <variation>K</variation>
    <location>
        <position position="454"/>
    </location>
</feature>
<feature type="sequence variant" id="VAR_012094" description="In FA11D; dbSNP:rs121965065." evidence="34">
    <original>F</original>
    <variation>V</variation>
    <location>
        <position position="460"/>
    </location>
</feature>
<feature type="sequence variant" id="VAR_067948" description="In FA11D; dbSNP:rs281875242." evidence="26">
    <original>I</original>
    <variation>S</variation>
    <location>
        <position position="481"/>
    </location>
</feature>
<feature type="sequence variant" id="VAR_012095" description="In FA11D; dbSNP:rs1554083754." evidence="6">
    <original>T</original>
    <variation>I</variation>
    <location>
        <position position="493"/>
    </location>
</feature>
<feature type="sequence variant" id="VAR_067949" description="In FA11D; dbSNP:rs140068026." evidence="14">
    <original>S</original>
    <variation>P</variation>
    <location>
        <position position="503"/>
    </location>
</feature>
<feature type="sequence variant" id="VAR_067950" description="In FA11D; mild phenotype; dbSNP:rs281875258." evidence="24">
    <original>D</original>
    <variation>G</variation>
    <location>
        <position position="506"/>
    </location>
</feature>
<feature type="sequence variant" id="VAR_054902" description="In FA11D; transfected cells contain reduced amount of mutant protein and display decreased secretion; dbSNP:rs281875278." evidence="7">
    <original>Y</original>
    <variation>H</variation>
    <location>
        <position position="511"/>
    </location>
</feature>
<feature type="sequence variant" id="VAR_067951" description="In FA11D; dbSNP:rs281875249." evidence="25">
    <original>C</original>
    <variation>F</variation>
    <location>
        <position position="514"/>
    </location>
</feature>
<feature type="sequence variant" id="VAR_067952" description="In FA11D; dbSNP:rs281875263." evidence="21">
    <original>D</original>
    <variation>E</variation>
    <location>
        <position position="526"/>
    </location>
</feature>
<feature type="sequence variant" id="VAR_054903" description="In FA11D; dbSNP:rs139695003." evidence="11">
    <original>P</original>
    <variation>L</variation>
    <location>
        <position position="538"/>
    </location>
</feature>
<feature type="sequence variant" id="VAR_076518" description="In FA11D; dbSNP:rs142952627." evidence="29">
    <original>E</original>
    <variation>K</variation>
    <location>
        <position position="543"/>
    </location>
</feature>
<feature type="sequence variant" id="VAR_076519" description="In FA11D; dbSNP:rs369935706." evidence="29">
    <original>H</original>
    <variation>R</variation>
    <location>
        <position position="552"/>
    </location>
</feature>
<feature type="sequence variant" id="VAR_054904" description="In FA11D; dbSNP:rs281875275." evidence="11">
    <original>E</original>
    <variation>K</variation>
    <location>
        <position position="565"/>
    </location>
</feature>
<feature type="sequence variant" id="VAR_067953" description="In FA11D; dbSNP:rs281875250." evidence="25">
    <original>S</original>
    <variation>L</variation>
    <location>
        <position position="575"/>
    </location>
</feature>
<feature type="sequence variant" id="VAR_054905" description="In FA11D; mutant is not secreted by transfected fibroblasts; dominant-negative effect; dbSNP:rs121965072." evidence="8">
    <original>W</original>
    <variation>S</variation>
    <location>
        <position position="587"/>
    </location>
</feature>
<feature type="sequence variant" id="VAR_012096" description="In FA11D; dbSNP:rs28934609." evidence="6">
    <original>S</original>
    <variation>R</variation>
    <location>
        <position position="594"/>
    </location>
</feature>
<feature type="sequence variant" id="VAR_067954" description="In FA11D; dbSNP:rs281875251." evidence="13 25">
    <original>E</original>
    <variation>K</variation>
    <location>
        <position position="597"/>
    </location>
</feature>
<feature type="sequence variant" id="VAR_067955" description="In FA11D; dbSNP:rs281875255." evidence="14">
    <original>Y</original>
    <variation>H</variation>
    <location>
        <position position="608"/>
    </location>
</feature>
<feature type="sequence variant" id="VAR_054906" description="In FA11D; dbSNP:rs281875276." evidence="11">
    <original>I</original>
    <variation>S</variation>
    <location>
        <position position="618"/>
    </location>
</feature>
<feature type="mutagenesis site" description="Reduces dimerization. Abolishes dimerization; when associated with A-308." evidence="17">
    <original>L</original>
    <variation>A</variation>
    <location>
        <position position="302"/>
    </location>
</feature>
<feature type="mutagenesis site" description="Reduces dimerization. Abolishes dimerization; when associated with A-302." evidence="17">
    <original>I</original>
    <variation>A</variation>
    <location>
        <position position="308"/>
    </location>
</feature>
<feature type="mutagenesis site" description="Abolishes dimerization." evidence="17">
    <original>G</original>
    <variation>C</variation>
    <location>
        <position position="344"/>
    </location>
</feature>
<feature type="mutagenesis site" description="Reduces dimerization." evidence="17">
    <original>Y</original>
    <variation>A</variation>
    <location>
        <position position="347"/>
    </location>
</feature>
<feature type="sequence conflict" description="In Ref. 2; AAA51985." evidence="41" ref="2">
    <original>C</original>
    <variation>S</variation>
    <location>
        <position position="226"/>
    </location>
</feature>
<feature type="strand" evidence="48">
    <location>
        <begin position="28"/>
        <end position="30"/>
    </location>
</feature>
<feature type="strand" evidence="48">
    <location>
        <begin position="34"/>
        <end position="39"/>
    </location>
</feature>
<feature type="helix" evidence="48">
    <location>
        <begin position="43"/>
        <end position="52"/>
    </location>
</feature>
<feature type="strand" evidence="48">
    <location>
        <begin position="53"/>
        <end position="55"/>
    </location>
</feature>
<feature type="strand" evidence="48">
    <location>
        <begin position="58"/>
        <end position="62"/>
    </location>
</feature>
<feature type="helix" evidence="45">
    <location>
        <begin position="70"/>
        <end position="72"/>
    </location>
</feature>
<feature type="strand" evidence="48">
    <location>
        <begin position="75"/>
        <end position="79"/>
    </location>
</feature>
<feature type="strand" evidence="46">
    <location>
        <begin position="82"/>
        <end position="84"/>
    </location>
</feature>
<feature type="strand" evidence="48">
    <location>
        <begin position="88"/>
        <end position="90"/>
    </location>
</feature>
<feature type="strand" evidence="48">
    <location>
        <begin position="94"/>
        <end position="98"/>
    </location>
</feature>
<feature type="helix" evidence="44">
    <location>
        <begin position="100"/>
        <end position="102"/>
    </location>
</feature>
<feature type="strand" evidence="48">
    <location>
        <begin position="114"/>
        <end position="129"/>
    </location>
</feature>
<feature type="helix" evidence="48">
    <location>
        <begin position="133"/>
        <end position="141"/>
    </location>
</feature>
<feature type="strand" evidence="48">
    <location>
        <begin position="143"/>
        <end position="145"/>
    </location>
</feature>
<feature type="strand" evidence="48">
    <location>
        <begin position="147"/>
        <end position="152"/>
    </location>
</feature>
<feature type="turn" evidence="48">
    <location>
        <begin position="159"/>
        <end position="163"/>
    </location>
</feature>
<feature type="strand" evidence="48">
    <location>
        <begin position="164"/>
        <end position="169"/>
    </location>
</feature>
<feature type="strand" evidence="45">
    <location>
        <begin position="171"/>
        <end position="174"/>
    </location>
</feature>
<feature type="strand" evidence="48">
    <location>
        <begin position="176"/>
        <end position="188"/>
    </location>
</feature>
<feature type="helix" evidence="48">
    <location>
        <begin position="191"/>
        <end position="193"/>
    </location>
</feature>
<feature type="strand" evidence="48">
    <location>
        <begin position="205"/>
        <end position="209"/>
    </location>
</feature>
<feature type="strand" evidence="48">
    <location>
        <begin position="212"/>
        <end position="219"/>
    </location>
</feature>
<feature type="helix" evidence="48">
    <location>
        <begin position="223"/>
        <end position="232"/>
    </location>
</feature>
<feature type="strand" evidence="48">
    <location>
        <begin position="237"/>
        <end position="242"/>
    </location>
</feature>
<feature type="helix" evidence="48">
    <location>
        <begin position="249"/>
        <end position="251"/>
    </location>
</feature>
<feature type="strand" evidence="48">
    <location>
        <begin position="254"/>
        <end position="259"/>
    </location>
</feature>
<feature type="strand" evidence="48">
    <location>
        <begin position="261"/>
        <end position="264"/>
    </location>
</feature>
<feature type="strand" evidence="48">
    <location>
        <begin position="269"/>
        <end position="278"/>
    </location>
</feature>
<feature type="helix" evidence="45">
    <location>
        <begin position="281"/>
        <end position="283"/>
    </location>
</feature>
<feature type="helix" evidence="48">
    <location>
        <begin position="284"/>
        <end position="286"/>
    </location>
</feature>
<feature type="turn" evidence="52">
    <location>
        <begin position="288"/>
        <end position="290"/>
    </location>
</feature>
<feature type="strand" evidence="48">
    <location>
        <begin position="296"/>
        <end position="302"/>
    </location>
</feature>
<feature type="strand" evidence="48">
    <location>
        <begin position="304"/>
        <end position="312"/>
    </location>
</feature>
<feature type="helix" evidence="48">
    <location>
        <begin position="314"/>
        <end position="322"/>
    </location>
</feature>
<feature type="strand" evidence="48">
    <location>
        <begin position="329"/>
        <end position="333"/>
    </location>
</feature>
<feature type="turn" evidence="45">
    <location>
        <begin position="337"/>
        <end position="339"/>
    </location>
</feature>
<feature type="strand" evidence="48">
    <location>
        <begin position="344"/>
        <end position="350"/>
    </location>
</feature>
<feature type="strand" evidence="48">
    <location>
        <begin position="352"/>
        <end position="355"/>
    </location>
</feature>
<feature type="strand" evidence="48">
    <location>
        <begin position="357"/>
        <end position="369"/>
    </location>
</feature>
<feature type="helix" evidence="48">
    <location>
        <begin position="374"/>
        <end position="376"/>
    </location>
</feature>
<feature type="helix" evidence="48">
    <location>
        <begin position="379"/>
        <end position="381"/>
    </location>
</feature>
<feature type="strand" evidence="48">
    <location>
        <begin position="391"/>
        <end position="393"/>
    </location>
</feature>
<feature type="strand" evidence="51">
    <location>
        <begin position="402"/>
        <end position="407"/>
    </location>
</feature>
<feature type="strand" evidence="51">
    <location>
        <begin position="409"/>
        <end position="411"/>
    </location>
</feature>
<feature type="strand" evidence="51">
    <location>
        <begin position="413"/>
        <end position="422"/>
    </location>
</feature>
<feature type="strand" evidence="51">
    <location>
        <begin position="425"/>
        <end position="428"/>
    </location>
</feature>
<feature type="helix" evidence="51">
    <location>
        <begin position="430"/>
        <end position="433"/>
    </location>
</feature>
<feature type="helix" evidence="51">
    <location>
        <begin position="439"/>
        <end position="441"/>
    </location>
</feature>
<feature type="strand" evidence="51">
    <location>
        <begin position="442"/>
        <end position="445"/>
    </location>
</feature>
<feature type="helix" evidence="51">
    <location>
        <begin position="451"/>
        <end position="453"/>
    </location>
</feature>
<feature type="strand" evidence="42">
    <location>
        <begin position="456"/>
        <end position="458"/>
    </location>
</feature>
<feature type="strand" evidence="51">
    <location>
        <begin position="461"/>
        <end position="468"/>
    </location>
</feature>
<feature type="helix" evidence="51">
    <location>
        <begin position="475"/>
        <end position="477"/>
    </location>
</feature>
<feature type="strand" evidence="51">
    <location>
        <begin position="482"/>
        <end position="488"/>
    </location>
</feature>
<feature type="strand" evidence="43">
    <location>
        <begin position="494"/>
        <end position="496"/>
    </location>
</feature>
<feature type="helix" evidence="51">
    <location>
        <begin position="504"/>
        <end position="506"/>
    </location>
</feature>
<feature type="helix" evidence="47">
    <location>
        <begin position="508"/>
        <end position="510"/>
    </location>
</feature>
<feature type="strand" evidence="51">
    <location>
        <begin position="512"/>
        <end position="519"/>
    </location>
</feature>
<feature type="strand" evidence="51">
    <location>
        <begin position="522"/>
        <end position="525"/>
    </location>
</feature>
<feature type="strand" evidence="51">
    <location>
        <begin position="533"/>
        <end position="536"/>
    </location>
</feature>
<feature type="helix" evidence="51">
    <location>
        <begin position="542"/>
        <end position="548"/>
    </location>
</feature>
<feature type="turn" evidence="43">
    <location>
        <begin position="549"/>
        <end position="551"/>
    </location>
</feature>
<feature type="strand" evidence="51">
    <location>
        <begin position="558"/>
        <end position="561"/>
    </location>
</feature>
<feature type="strand" evidence="50">
    <location>
        <begin position="567"/>
        <end position="569"/>
    </location>
</feature>
<feature type="turn" evidence="49">
    <location>
        <begin position="572"/>
        <end position="576"/>
    </location>
</feature>
<feature type="strand" evidence="51">
    <location>
        <begin position="577"/>
        <end position="583"/>
    </location>
</feature>
<feature type="strand" evidence="51">
    <location>
        <begin position="586"/>
        <end position="595"/>
    </location>
</feature>
<feature type="strand" evidence="51">
    <location>
        <begin position="597"/>
        <end position="600"/>
    </location>
</feature>
<feature type="strand" evidence="51">
    <location>
        <begin position="606"/>
        <end position="610"/>
    </location>
</feature>
<feature type="helix" evidence="51">
    <location>
        <begin position="611"/>
        <end position="614"/>
    </location>
</feature>
<feature type="helix" evidence="51">
    <location>
        <begin position="615"/>
        <end position="623"/>
    </location>
</feature>
<proteinExistence type="evidence at protein level"/>
<gene>
    <name type="primary">F11</name>
</gene>
<evidence type="ECO:0000255" key="1"/>
<evidence type="ECO:0000255" key="2">
    <source>
        <dbReference type="PROSITE-ProRule" id="PRU00274"/>
    </source>
</evidence>
<evidence type="ECO:0000255" key="3">
    <source>
        <dbReference type="PROSITE-ProRule" id="PRU00315"/>
    </source>
</evidence>
<evidence type="ECO:0000269" key="4">
    <source>
    </source>
</evidence>
<evidence type="ECO:0000269" key="5">
    <source>
    </source>
</evidence>
<evidence type="ECO:0000269" key="6">
    <source>
    </source>
</evidence>
<evidence type="ECO:0000269" key="7">
    <source>
    </source>
</evidence>
<evidence type="ECO:0000269" key="8">
    <source>
    </source>
</evidence>
<evidence type="ECO:0000269" key="9">
    <source>
    </source>
</evidence>
<evidence type="ECO:0000269" key="10">
    <source>
    </source>
</evidence>
<evidence type="ECO:0000269" key="11">
    <source>
    </source>
</evidence>
<evidence type="ECO:0000269" key="12">
    <source>
    </source>
</evidence>
<evidence type="ECO:0000269" key="13">
    <source>
    </source>
</evidence>
<evidence type="ECO:0000269" key="14">
    <source>
    </source>
</evidence>
<evidence type="ECO:0000269" key="15">
    <source>
    </source>
</evidence>
<evidence type="ECO:0000269" key="16">
    <source>
    </source>
</evidence>
<evidence type="ECO:0000269" key="17">
    <source>
    </source>
</evidence>
<evidence type="ECO:0000269" key="18">
    <source>
    </source>
</evidence>
<evidence type="ECO:0000269" key="19">
    <source>
    </source>
</evidence>
<evidence type="ECO:0000269" key="20">
    <source>
    </source>
</evidence>
<evidence type="ECO:0000269" key="21">
    <source>
    </source>
</evidence>
<evidence type="ECO:0000269" key="22">
    <source>
    </source>
</evidence>
<evidence type="ECO:0000269" key="23">
    <source>
    </source>
</evidence>
<evidence type="ECO:0000269" key="24">
    <source>
    </source>
</evidence>
<evidence type="ECO:0000269" key="25">
    <source>
    </source>
</evidence>
<evidence type="ECO:0000269" key="26">
    <source>
    </source>
</evidence>
<evidence type="ECO:0000269" key="27">
    <source>
    </source>
</evidence>
<evidence type="ECO:0000269" key="28">
    <source>
    </source>
</evidence>
<evidence type="ECO:0000269" key="29">
    <source>
    </source>
</evidence>
<evidence type="ECO:0000269" key="30">
    <source>
    </source>
</evidence>
<evidence type="ECO:0000269" key="31">
    <source>
    </source>
</evidence>
<evidence type="ECO:0000269" key="32">
    <source>
    </source>
</evidence>
<evidence type="ECO:0000269" key="33">
    <source>
    </source>
</evidence>
<evidence type="ECO:0000269" key="34">
    <source>
    </source>
</evidence>
<evidence type="ECO:0000269" key="35">
    <source>
    </source>
</evidence>
<evidence type="ECO:0000269" key="36">
    <source>
    </source>
</evidence>
<evidence type="ECO:0000269" key="37">
    <source>
    </source>
</evidence>
<evidence type="ECO:0000269" key="38">
    <source>
    </source>
</evidence>
<evidence type="ECO:0000269" key="39">
    <source ref="4"/>
</evidence>
<evidence type="ECO:0000303" key="40">
    <source>
    </source>
</evidence>
<evidence type="ECO:0000305" key="41"/>
<evidence type="ECO:0007829" key="42">
    <source>
        <dbReference type="PDB" id="1ZTJ"/>
    </source>
</evidence>
<evidence type="ECO:0007829" key="43">
    <source>
        <dbReference type="PDB" id="4X6P"/>
    </source>
</evidence>
<evidence type="ECO:0007829" key="44">
    <source>
        <dbReference type="PDB" id="5EOD"/>
    </source>
</evidence>
<evidence type="ECO:0007829" key="45">
    <source>
        <dbReference type="PDB" id="5EOK"/>
    </source>
</evidence>
<evidence type="ECO:0007829" key="46">
    <source>
        <dbReference type="PDB" id="5I25"/>
    </source>
</evidence>
<evidence type="ECO:0007829" key="47">
    <source>
        <dbReference type="PDB" id="6AOD"/>
    </source>
</evidence>
<evidence type="ECO:0007829" key="48">
    <source>
        <dbReference type="PDB" id="6I58"/>
    </source>
</evidence>
<evidence type="ECO:0007829" key="49">
    <source>
        <dbReference type="PDB" id="6USY"/>
    </source>
</evidence>
<evidence type="ECO:0007829" key="50">
    <source>
        <dbReference type="PDB" id="6VLU"/>
    </source>
</evidence>
<evidence type="ECO:0007829" key="51">
    <source>
        <dbReference type="PDB" id="7MBO"/>
    </source>
</evidence>
<evidence type="ECO:0007829" key="52">
    <source>
        <dbReference type="PDB" id="7QOT"/>
    </source>
</evidence>